<reference evidence="19 22" key="1">
    <citation type="journal article" date="1993" name="Biochim. Biophys. Acta">
        <title>Molecular cloning and sequencing of the murine alpha-2-macroglobulin receptor cDNA.</title>
        <authorList>
            <person name="Van Leuven F."/>
            <person name="Stas L."/>
            <person name="Raymakers L."/>
            <person name="Overbergh L."/>
            <person name="De Strooper B."/>
            <person name="Hilliker C."/>
            <person name="Lorent K."/>
            <person name="Fias E."/>
            <person name="Umans L."/>
            <person name="Torrekens S."/>
            <person name="Serneels L."/>
            <person name="Moechars D."/>
            <person name="Van den Berghe H."/>
        </authorList>
    </citation>
    <scope>PRELIMINARY NUCLEOTIDE SEQUENCE [MRNA]</scope>
    <source>
        <tissue evidence="22">Liver</tissue>
    </source>
</reference>
<reference evidence="21" key="2">
    <citation type="journal article" date="2002" name="Biochim. Biophys. Acta">
        <title>Functional expression of murine LRP1 requires correction of Lrp1 cDNA sequences.</title>
        <authorList>
            <person name="Smeijers L."/>
            <person name="Willems S."/>
            <person name="Lauwers A."/>
            <person name="Thiry E."/>
            <person name="van Leuven F."/>
            <person name="Roebroek A.J.M."/>
        </authorList>
    </citation>
    <scope>NUCLEOTIDE SEQUENCE [GENOMIC DNA / MRNA]</scope>
    <source>
        <strain evidence="21">129/J</strain>
        <strain evidence="20">CBA/J</strain>
    </source>
</reference>
<reference key="3">
    <citation type="journal article" date="1992" name="J. Biol. Chem.">
        <title>The alpha 2-macroglobulin receptor/low density lipoprotein receptor-related protein binds and internalizes Pseudomonas exotoxin A.</title>
        <authorList>
            <person name="Kounnas M.Z."/>
            <person name="Morris R.E."/>
            <person name="Thompson M.R."/>
            <person name="FitzGerald D.J."/>
            <person name="Strickland D.K."/>
            <person name="Saelinger C.B."/>
        </authorList>
    </citation>
    <scope>FUNCTION AS A RECEPTOR FOR P.AERUGINOSA EXOA TOXIN</scope>
</reference>
<reference key="4">
    <citation type="journal article" date="2001" name="Traffic">
        <title>Disabled-2 colocalizes with the LDLR in clathrin-coated pits and interacts with AP-2.</title>
        <authorList>
            <person name="Morris S.M."/>
            <person name="Cooper J.A."/>
        </authorList>
    </citation>
    <scope>INTERACTION WITH DAB2</scope>
</reference>
<reference evidence="19" key="5">
    <citation type="journal article" date="2004" name="FEBS Lett.">
        <title>Low-density lipoprotein receptor-related protein interacts with MafB, a regulator of hindbrain development.</title>
        <authorList>
            <person name="Petersen H.H."/>
            <person name="Hilpert J."/>
            <person name="Jacobsen C."/>
            <person name="Lauwers A."/>
            <person name="Roebroek A.J.M."/>
            <person name="Willnow T.E."/>
        </authorList>
    </citation>
    <scope>INTERACTION WITH MAFB</scope>
</reference>
<reference evidence="19" key="6">
    <citation type="journal article" date="1992" name="Cell">
        <title>LDL receptor-related protein internalizes and degrades uPA-PAI-1 complexes and is essential for embryo implantation.</title>
        <authorList>
            <person name="Herz J."/>
            <person name="Clouthier D.E."/>
            <person name="Hammer R.E."/>
        </authorList>
    </citation>
    <scope>FUNCTION</scope>
    <scope>DISRUPTION PHENOTYPE</scope>
    <scope>DEVELOPMENTAL STAGE</scope>
</reference>
<reference key="7">
    <citation type="journal article" date="1993" name="Cell">
        <authorList>
            <person name="Herz J."/>
            <person name="Couthier D.E."/>
            <person name="Hammer R.E."/>
        </authorList>
    </citation>
    <scope>ERRATUM OF PUBMED:1423604</scope>
</reference>
<reference key="8">
    <citation type="journal article" date="2000" name="Biochem. Biophys. Res. Commun.">
        <title>LDL receptor-related protein as a component of the midkine receptor.</title>
        <authorList>
            <person name="Muramatsu H."/>
            <person name="Zou K."/>
            <person name="Sakaguchi N."/>
            <person name="Ikematsu S."/>
            <person name="Sakuma S."/>
            <person name="Muramatsu T."/>
        </authorList>
    </citation>
    <scope>INTERACTION WITH MDK</scope>
</reference>
<reference key="9">
    <citation type="journal article" date="2009" name="Immunity">
        <title>The phagosomal proteome in interferon-gamma-activated macrophages.</title>
        <authorList>
            <person name="Trost M."/>
            <person name="English L."/>
            <person name="Lemieux S."/>
            <person name="Courcelles M."/>
            <person name="Desjardins M."/>
            <person name="Thibault P."/>
        </authorList>
    </citation>
    <scope>PHOSPHORYLATION [LARGE SCALE ANALYSIS] AT SER-4524</scope>
    <scope>IDENTIFICATION BY MASS SPECTROMETRY [LARGE SCALE ANALYSIS]</scope>
</reference>
<reference key="10">
    <citation type="journal article" date="2009" name="Mol. Cell. Proteomics">
        <title>The mouse C2C12 myoblast cell surface N-linked glycoproteome: identification, glycosite occupancy, and membrane orientation.</title>
        <authorList>
            <person name="Gundry R.L."/>
            <person name="Raginski K."/>
            <person name="Tarasova Y."/>
            <person name="Tchernyshyov I."/>
            <person name="Bausch-Fluck D."/>
            <person name="Elliott S.T."/>
            <person name="Boheler K.R."/>
            <person name="Van Eyk J.E."/>
            <person name="Wollscheid B."/>
        </authorList>
    </citation>
    <scope>GLYCOSYLATION [LARGE SCALE ANALYSIS] AT ASN-730; ASN-2128 AND ASN-3049</scope>
    <source>
        <tissue>Myoblast</tissue>
    </source>
</reference>
<reference key="11">
    <citation type="journal article" date="2009" name="Nat. Biotechnol.">
        <title>Mass-spectrometric identification and relative quantification of N-linked cell surface glycoproteins.</title>
        <authorList>
            <person name="Wollscheid B."/>
            <person name="Bausch-Fluck D."/>
            <person name="Henderson C."/>
            <person name="O'Brien R."/>
            <person name="Bibel M."/>
            <person name="Schiess R."/>
            <person name="Aebersold R."/>
            <person name="Watts J.D."/>
        </authorList>
    </citation>
    <scope>GLYCOSYLATION [LARGE SCALE ANALYSIS] AT ASN-447</scope>
</reference>
<reference key="12">
    <citation type="journal article" date="2008" name="J. Biol. Chem.">
        <title>Cholix toxin, a novel ADP-ribosylating factor from Vibrio cholerae.</title>
        <authorList>
            <person name="Jorgensen R."/>
            <person name="Purdy A.E."/>
            <person name="Fieldhouse R.J."/>
            <person name="Kimber M.S."/>
            <person name="Bartlett D.H."/>
            <person name="Merrill A.R."/>
        </authorList>
    </citation>
    <scope>FUNCTION AS A RECEPTOR FOR CHOLIX TOXIN</scope>
</reference>
<reference key="13">
    <citation type="journal article" date="2010" name="Cell">
        <title>A tissue-specific atlas of mouse protein phosphorylation and expression.</title>
        <authorList>
            <person name="Huttlin E.L."/>
            <person name="Jedrychowski M.P."/>
            <person name="Elias J.E."/>
            <person name="Goswami T."/>
            <person name="Rad R."/>
            <person name="Beausoleil S.A."/>
            <person name="Villen J."/>
            <person name="Haas W."/>
            <person name="Sowa M.E."/>
            <person name="Gygi S.P."/>
        </authorList>
    </citation>
    <scope>IDENTIFICATION BY MASS SPECTROMETRY [LARGE SCALE ANALYSIS]</scope>
    <source>
        <tissue>Brain</tissue>
        <tissue>Brown adipose tissue</tissue>
        <tissue>Heart</tissue>
        <tissue>Kidney</tissue>
        <tissue>Liver</tissue>
        <tissue>Lung</tissue>
        <tissue>Pancreas</tissue>
        <tissue>Spleen</tissue>
        <tissue>Testis</tissue>
    </source>
</reference>
<reference key="14">
    <citation type="journal article" date="2013" name="Mol. Cell">
        <title>SIRT5-mediated lysine desuccinylation impacts diverse metabolic pathways.</title>
        <authorList>
            <person name="Park J."/>
            <person name="Chen Y."/>
            <person name="Tishkoff D.X."/>
            <person name="Peng C."/>
            <person name="Tan M."/>
            <person name="Dai L."/>
            <person name="Xie Z."/>
            <person name="Zhang Y."/>
            <person name="Zwaans B.M."/>
            <person name="Skinner M.E."/>
            <person name="Lombard D.B."/>
            <person name="Zhao Y."/>
        </authorList>
    </citation>
    <scope>ACETYLATION [LARGE SCALE ANALYSIS] AT LYS-2010</scope>
    <scope>IDENTIFICATION BY MASS SPECTROMETRY [LARGE SCALE ANALYSIS]</scope>
    <source>
        <tissue>Embryonic fibroblast</tissue>
    </source>
</reference>
<reference key="15">
    <citation type="journal article" date="2020" name="Nature">
        <title>LRP1 is a master regulator of tau uptake and spread.</title>
        <authorList>
            <person name="Rauch J.N."/>
            <person name="Luna G."/>
            <person name="Guzman E."/>
            <person name="Challis C."/>
            <person name="Sibih Y.E."/>
            <person name="Leshuk C."/>
            <person name="Hernandez I."/>
            <person name="Wegmann S."/>
            <person name="Hyman B.T."/>
            <person name="Gradinaru V."/>
            <person name="Kampmann M."/>
            <person name="Kosik K.S."/>
        </authorList>
    </citation>
    <scope>FUNCTION</scope>
</reference>
<reference key="16">
    <citation type="journal article" date="2022" name="Proc. Natl. Acad. Sci. U.S.A.">
        <title>Heterozygous LRP1 deficiency causes developmental dysplasia of the hip by impairing triradiate chondrocytes differentiation due to inhibition of autophagy.</title>
        <authorList>
            <person name="Yan W."/>
            <person name="Zheng L."/>
            <person name="Xu X."/>
            <person name="Hao Z."/>
            <person name="Zhang Y."/>
            <person name="Lu J."/>
            <person name="Sun Z."/>
            <person name="Dai J."/>
            <person name="Shi D."/>
            <person name="Guo B."/>
            <person name="Jiang Q."/>
        </authorList>
    </citation>
    <scope>DISRUPTION PHENOTYPE</scope>
</reference>
<reference key="17">
    <citation type="journal article" date="2024" name="J. Clin. Invest.">
        <title>GPR126 is a specifier of blood-brain barrier formation in the mouse central nervous system.</title>
        <authorList>
            <person name="Kakogiannos N."/>
            <person name="Scalise A.A."/>
            <person name="Martini E."/>
            <person name="Maderna C."/>
            <person name="Benvenuto A.F."/>
            <person name="D'Antonio M."/>
            <person name="Carmignani L."/>
            <person name="Magni S."/>
            <person name="Gullotta G.S."/>
            <person name="Lampugnani M.G."/>
            <person name="Iannelli F."/>
            <person name="Beznoussenko G.V."/>
            <person name="Mironov A.A."/>
            <person name="Cerutti C."/>
            <person name="Bentley K."/>
            <person name="Philippides A."/>
            <person name="Zanardi F."/>
            <person name="Bacigaluppi M."/>
            <person name="Sigismund S."/>
            <person name="Bassani C."/>
            <person name="Farina C."/>
            <person name="Martino G."/>
            <person name="De Giovanni M."/>
            <person name="Dejana E."/>
            <person name="Iannacone M."/>
            <person name="Inverso D."/>
            <person name="Giannotta M."/>
        </authorList>
    </citation>
    <scope>INTERACTION WITH ADGRG6</scope>
</reference>
<protein>
    <recommendedName>
        <fullName evidence="19">Prolow-density lipoprotein receptor-related protein 1</fullName>
        <shortName>LRP-1</shortName>
    </recommendedName>
    <alternativeName>
        <fullName>Alpha-2-macroglobulin receptor</fullName>
        <shortName>A2MR</shortName>
    </alternativeName>
    <cdAntigenName>CD91</cdAntigenName>
    <component>
        <recommendedName>
            <fullName>Low-density lipoprotein receptor-related protein 1 85 kDa subunit</fullName>
            <shortName>LRP-85</shortName>
        </recommendedName>
    </component>
    <component>
        <recommendedName>
            <fullName>Low-density lipoprotein receptor-related protein 1 515 kDa subunit</fullName>
            <shortName>LRP-515</shortName>
        </recommendedName>
    </component>
    <component>
        <recommendedName>
            <fullName>Low-density lipoprotein receptor-related protein 1 intracellular domain</fullName>
            <shortName>LRPICD</shortName>
        </recommendedName>
    </component>
</protein>
<gene>
    <name evidence="23" type="primary">Lrp1</name>
    <name evidence="23" type="synonym">A2mr</name>
</gene>
<keyword id="KW-0007">Acetylation</keyword>
<keyword id="KW-0106">Calcium</keyword>
<keyword id="KW-1003">Cell membrane</keyword>
<keyword id="KW-0168">Coated pit</keyword>
<keyword id="KW-0963">Cytoplasm</keyword>
<keyword id="KW-0206">Cytoskeleton</keyword>
<keyword id="KW-0217">Developmental protein</keyword>
<keyword id="KW-1015">Disulfide bond</keyword>
<keyword id="KW-0245">EGF-like domain</keyword>
<keyword id="KW-0254">Endocytosis</keyword>
<keyword id="KW-0325">Glycoprotein</keyword>
<keyword id="KW-0333">Golgi apparatus</keyword>
<keyword id="KW-0472">Membrane</keyword>
<keyword id="KW-0479">Metal-binding</keyword>
<keyword id="KW-0539">Nucleus</keyword>
<keyword id="KW-0597">Phosphoprotein</keyword>
<keyword id="KW-0675">Receptor</keyword>
<keyword id="KW-1185">Reference proteome</keyword>
<keyword id="KW-0677">Repeat</keyword>
<keyword id="KW-0732">Signal</keyword>
<keyword id="KW-0812">Transmembrane</keyword>
<keyword id="KW-1133">Transmembrane helix</keyword>
<evidence type="ECO:0000250" key="1"/>
<evidence type="ECO:0000250" key="2">
    <source>
        <dbReference type="UniProtKB" id="G3V928"/>
    </source>
</evidence>
<evidence type="ECO:0000250" key="3">
    <source>
        <dbReference type="UniProtKB" id="P01130"/>
    </source>
</evidence>
<evidence type="ECO:0000250" key="4">
    <source>
        <dbReference type="UniProtKB" id="Q07954"/>
    </source>
</evidence>
<evidence type="ECO:0000255" key="5"/>
<evidence type="ECO:0000255" key="6">
    <source>
        <dbReference type="PROSITE-ProRule" id="PRU00076"/>
    </source>
</evidence>
<evidence type="ECO:0000255" key="7">
    <source>
        <dbReference type="PROSITE-ProRule" id="PRU00124"/>
    </source>
</evidence>
<evidence type="ECO:0000269" key="8">
    <source>
    </source>
</evidence>
<evidence type="ECO:0000269" key="9">
    <source>
    </source>
</evidence>
<evidence type="ECO:0000269" key="10">
    <source>
    </source>
</evidence>
<evidence type="ECO:0000269" key="11">
    <source>
    </source>
</evidence>
<evidence type="ECO:0000269" key="12">
    <source>
    </source>
</evidence>
<evidence type="ECO:0000269" key="13">
    <source>
    </source>
</evidence>
<evidence type="ECO:0000269" key="14">
    <source>
    </source>
</evidence>
<evidence type="ECO:0000269" key="15">
    <source>
    </source>
</evidence>
<evidence type="ECO:0000269" key="16">
    <source>
    </source>
</evidence>
<evidence type="ECO:0000269" key="17">
    <source>
    </source>
</evidence>
<evidence type="ECO:0000269" key="18">
    <source>
    </source>
</evidence>
<evidence type="ECO:0000305" key="19"/>
<evidence type="ECO:0000312" key="20">
    <source>
        <dbReference type="EMBL" id="AAL09566.1"/>
    </source>
</evidence>
<evidence type="ECO:0000312" key="21">
    <source>
        <dbReference type="EMBL" id="AAL09567.1"/>
    </source>
</evidence>
<evidence type="ECO:0000312" key="22">
    <source>
        <dbReference type="EMBL" id="CAA47817.1"/>
    </source>
</evidence>
<evidence type="ECO:0000312" key="23">
    <source>
        <dbReference type="MGI" id="MGI:96828"/>
    </source>
</evidence>
<evidence type="ECO:0007744" key="24">
    <source>
    </source>
</evidence>
<evidence type="ECO:0007744" key="25">
    <source>
    </source>
</evidence>
<comment type="function">
    <text evidence="4 10 16">Endocytic receptor involved in endocytosis and in phagocytosis of apoptotic cells. Required for early embryonic development (PubMed:1423604). Involved in cellular lipid homeostasis. Involved in the plasma clearance of chylomicron remnants and activated LRPAP1 (alpha 2-macroglobulin), as well as the local metabolism of complexes between plasminogen activators and their endogenous inhibitors. Acts as an alpha-2-macroglobulin receptor (By similarity). Acts as a TAU/MAPT receptor and controls the endocytosis of TAU/MAPT as well as its subsequent spread (PubMed:32296178). May modulate cellular events, such as APP metabolism, kinase-dependent intracellular signaling, neuronal calcium signaling as well as neurotransmission (By similarity). Also acts as a receptor for IGFBP3 to mediate cell growth inhibition (By similarity).</text>
</comment>
<comment type="function">
    <text evidence="12 13">(Microbial infection) Functions as a receptor for Vibrio cholerae cholix toxin and for Pseudomonas aeruginosa exotoxin A.</text>
</comment>
<comment type="subunit">
    <text evidence="4 8 9 11 18">Heterodimer of an 85-kDa membrane-bound carboxyl subunit and a non-covalently attached 515-kDa N-terminal subunit. Intracellular domain interacts with MAFB (PubMed:15135046). Found in a complex with PID1/PCLI1, LRP1 and CUBNI. Interacts with SNX17, PID1/PCLI1, PDGF and CUBN. The intracellular domain interacts with SHC1, GULP1 and DAB1 (By similarity). Can weakly interact (via NPXY motif) with DAB2 (via PID domain); the interaction is enhanced by tyrosine phosphorylation of the NPXY motif (PubMed:11247302). Interacts with MDK; promotes neuronal survival (PubMed:10772929). Interacts with LRPAP1; this interaction is followed by rapid internalization. Interacts with uPA/PLAU and PAI1/SERPINE1, either individually or in complex with each other, leading to rapid endocytosis; this interaction is abolished in the presence of LRPAP1/RAP. Also interacts with tPA/PLAT alone or in complex with SERPINE1. Interacts with the urokinase receptor PLAUR; this interaction leads to PLAUR internalization and is impaired in the presence of SORL1. Interacts with PDGFB. Interacts with TAU/MAPT, leading to endocytosis; this interaction is reduced in the presence of LRPAP1/RAP (By similarity). Interacts with IGFBP3 (By similarity). Interacts with ADGRG6 (PubMed:39087467).</text>
</comment>
<comment type="interaction">
    <interactant intactId="EBI-300955">
        <id>Q91ZX7</id>
    </interactant>
    <interactant intactId="EBI-81680">
        <id>P97318</id>
        <label>Dab1</label>
    </interactant>
    <organismsDiffer>false</organismsDiffer>
    <experiments>2</experiments>
</comment>
<comment type="interaction">
    <interactant intactId="EBI-300955">
        <id>Q91ZX7</id>
    </interactant>
    <interactant intactId="EBI-300895">
        <id>Q62108</id>
        <label>Dlg4</label>
    </interactant>
    <organismsDiffer>false</organismsDiffer>
    <experiments>4</experiments>
</comment>
<comment type="interaction">
    <interactant intactId="EBI-300955">
        <id>Q91ZX7</id>
    </interactant>
    <interactant intactId="EBI-2257257">
        <id>P48356</id>
        <label>Lepr</label>
    </interactant>
    <organismsDiffer>false</organismsDiffer>
    <experiments>2</experiments>
</comment>
<comment type="interaction">
    <interactant intactId="EBI-300955">
        <id>Q91ZX7</id>
    </interactant>
    <interactant intactId="EBI-74515">
        <id>Q9WVI9</id>
        <label>Mapk8ip1</label>
    </interactant>
    <organismsDiffer>false</organismsDiffer>
    <experiments>2</experiments>
</comment>
<comment type="interaction">
    <interactant intactId="EBI-300955">
        <id>Q91ZX7</id>
    </interactant>
    <interactant intactId="EBI-74576">
        <id>Q9ERE9</id>
        <label>Mapk8ip2</label>
    </interactant>
    <organismsDiffer>false</organismsDiffer>
    <experiments>2</experiments>
</comment>
<comment type="subcellular location">
    <molecule>Low-density lipoprotein receptor-related protein 1 85 kDa subunit</molecule>
    <subcellularLocation>
        <location evidence="4">Cell membrane</location>
        <topology evidence="4">Single-pass type I membrane protein</topology>
    </subcellularLocation>
    <subcellularLocation>
        <location evidence="4">Membrane</location>
        <location evidence="4">Coated pit</location>
    </subcellularLocation>
</comment>
<comment type="subcellular location">
    <molecule>Low-density lipoprotein receptor-related protein 1 515 kDa subunit</molecule>
    <subcellularLocation>
        <location evidence="4">Cell membrane</location>
        <topology evidence="4">Peripheral membrane protein</topology>
        <orientation evidence="4">Extracellular side</orientation>
    </subcellularLocation>
    <subcellularLocation>
        <location evidence="4">Membrane</location>
        <location evidence="4">Coated pit</location>
    </subcellularLocation>
</comment>
<comment type="subcellular location">
    <subcellularLocation>
        <location evidence="2">Golgi outpost</location>
    </subcellularLocation>
    <subcellularLocation>
        <location evidence="2">Cytoplasm</location>
        <location evidence="2">Cytoskeleton</location>
        <location evidence="2">Microtubule organizing center</location>
    </subcellularLocation>
    <text evidence="2">Localizes to the postsynaptic Golgi apparatus region, also named Golgi outpost, which shapes dendrite morphology by functioning as sites of acentrosomal microtubule nucleation.</text>
</comment>
<comment type="subcellular location">
    <molecule>Low-density lipoprotein receptor-related protein 1 intracellular domain</molecule>
    <subcellularLocation>
        <location evidence="4">Cytoplasm</location>
    </subcellularLocation>
    <subcellularLocation>
        <location evidence="4">Nucleus</location>
    </subcellularLocation>
    <text evidence="4">After cleavage, the intracellular domain (LRPICD) is detected both in the cytoplasm and in the nucleus.</text>
</comment>
<comment type="developmental stage">
    <text evidence="10">Highly expressed at 7.5 dpc in the trophoblast primary cells at the anti-mesometrial pole (at protein level). Also expressed in secondary trophoblast cells at the ectoplacental cone, although at lower levels (at protein level).</text>
</comment>
<comment type="PTM">
    <text evidence="1">Phosphorylated on serine and threonine residues.</text>
</comment>
<comment type="PTM">
    <text evidence="1">Phosphorylated on tyrosine residues upon stimulation with PDGF. Tyrosine phosphorylation promotes interaction with SHC1 (By similarity).</text>
</comment>
<comment type="PTM">
    <text evidence="4">Cleaved into a 85 kDa membrane-spanning subunit (LRP-85) and a 515 kDa large extracellular domain (LRP-515) that remains non-covalently associated. Gamma-secretase-dependent cleavage of LRP-85 releases the intracellular domain from the membrane (By similarity).</text>
</comment>
<comment type="disruption phenotype">
    <text evidence="10 17">Homozygous knockout is embryonic lethal, most probably occurring around the implantation stage (PubMed:1423604, PubMed:36067312). Heterozygous mice do not show any overt phenotype (PubMed:1423604, PubMed:36067312). However, they exhibit a reduction of the acetabular volumes, leading to defective coverage of the femoral heads (PubMed:36067312).</text>
</comment>
<comment type="similarity">
    <text evidence="5">Belongs to the LDLR family.</text>
</comment>
<sequence>MLTPPLLLLLPLLSALVSGATMDAPKTCSPKQFACRDQITCISKGWRCDGERDCPDGSDEAPEICPQSKAQRCPPNEHSCLGTELCVPMSRLCNGIQDCMDGSDEGAHCRELRANCSRMGCQHHCVPTPSGPTCYCNSSFQLQADGKTCKDFDECSVYGTCSQLCTNTDGSFTCGCVEGYLLQPDNRSCKAKNEPVDRPPVLLIANSQNILATYLSGAQVSTITPTSTRQTTAMDFSYANETVCWVHVGDSAAQTQLKCARMPGLKGFVDEHTINISLSLHHVEQMAIDWLTGNFYFVDDIDDRIFVCNRNGDTCVTLLDLELYNPKGIALDPAMGKVFFTDYGQIPKVERCDMDGQNRTKLVDSKIVFPHGITLDLVSRLVYWADAYLDYIEVVDYEGKGRQTIIQGILIEHLYGLTVFENYLYATNSDNANTQQKTSVIRVNRFNSTEYQVVTRVDKGGALHIYHQRRQPRVRSHACENDQYGKPGGCSDICLLANSHKARTCRCRSGFSLGSDGKSCKKPEHELFLVYGKGRPGIIRGMDMGAKVPDEHMIPIENLMNPRALDFHAETGFIYFADTTSYLIGRQKIDGTERETILKDGIHNVEGVAVDWMGDNLYWTDDGPKKTISVARLEKAAQTRKTLIEGKMTHPRAIVVDPLNGWMYWTDWEEDPKDSRRGRLERAWMDGSHRDIFVTSKTVLWPNGLSLDIPAGRLYWVDAFYDRIETILLNGTDRKIVYEGPELNHAFGLCHHGNYLFWTEYRSGSVYRLERGVAGAPPTVTLLRSERPPIFEIRMYDAQQQQVGTNKCRVNNGGCSSLCLATPGSRQCACAEDQVLDTDGVTCLANPSYVPPPQCQPGEFACANNRCIQERWKCDGDNDCLDNSDEAPALCHQHTCPSDRFKCENNRCIPNRWLCDGDNDCGNSEDESNATCSARTCPPNQFSCASGRCIPISWTCDLDDDCGDRSDESASCAYPTCFPLTQFTCNNGRCININWRCDNDNDCGDNSDEAGCSHSCSSTQFKCNSGRCIPEHWTCDGDNDCGDYSDETHANCTNQATRPPGGCHSDEFQCRLDGLCIPLRWRCDGDTDCMDSSDEKSCEGVTHVCDPNVKFGCKDSARCISKAWVCDGDSDCEDNSDEENCEALACRPPSHPCANNTSVCLPPDKLCDGKDDCGDGSDEGELCDQCSLNNGGCSHNCSVAPGEGIVCSCPLGMELGSDNHTCQIQSYCAKHLKCSQKCDQNKFSVKCSCYEGWVLEPDGESCRSLDPFKPFIIFSNRHEIRRIDLHKGDYSVLVPGLRNTIALDFHLSQSALYWTDVVEDKIYRGKLLDNGALTSFEVVIQYGLATPEGLAVDWIAGNIYWVESNLDQIEVAKLDGTLRTTLLAGDIEHPRAIALDPRDGILFWTDWDASLPRIEAASMSGAGRRTIHRETGSGGWPNGLTVDYLEKRILWIDARSDAIYSARYDGSGHMEVLRGHEFLSHPFAVTLYGGEVYWTDWRTNTLAKANKWTGHNVTVVQRTNTQPFDLQVYHPSRQPMAPNPCEANGGRGPCSHLCLINYNRTVSCACPHLMKLHKDNTTCYEFKKFLLYARQMEIRGVDLDAPYYNYIISFTVPDIDNVTVLDYDAREQRVYWSDVRTQAIKRAFINGTGVETVVSADLPNAHGLAVDWVSRNLFWTSYDTNKKQINVARLDGSFKNAVVQGLEQPHGLVVHPLRGKLYWTDGDNISMANMDGSNHTLLFSGQKGPVGLAIDFPESKLYWISSGNHTINRCNLDGSELEVIDTMRSQLGKATALAIMGDKLWWADQVSEKMGTCNKADGSGSVVLRNSTTLVMHMKVYDESIQLEHEGTNPCSVNNGDCSQLCLPTSETTRSCMCTAGYSLRSGQQACEGVGSFLLYSVHEGIRGIPLDPNDKSDALVPVSGTSLAVGIDFHAENDTIYWVDMGLSTISRAKRDQTWREDVVTNGIGRVEGIAVDWIAGNIYWTDQGFDVIEVARLNGSFRYVVISQGLDKPRAITVHPEKGYLFWTEWGHYPRIERSRLDGTERVVLVNVSISWPNGISVDYQGGKLYWCDARMDKIERIDLETGENREVVLSSNNMDMFSVSVFEDFIYWSDRTHANGSIKRGCKDNATDSVPLRTGIGVQLKDIKVFNRDRQKGTNVCAVANGGCQQLCLYRGGGQRACACAHGMLAEDGASCREYAGYLLYSERTILKSIHLSDERNLNAPVQPFEDPEHMKNVIALAFDYRAGTSPGTPNRIFFSDIHFGNIQQINDDGSGRTTIVENVGSVEGLAYHRGWDTLYWTSYTTSTITRHTVDQTRPGAFERETVITMSGDDHPRAFVLDECQNLMFWTNWNELHPSIMRAALSGANVLTLIEKDIRTPNGLAIDHRAEKLYFSDATLDKIERCEYDGSHRYVILKSEPVHPFGLAVYGEHIFWTDWVRRAVQRANKYVGSDMKLLRVDIPQQPMGIIAVANDTNSCELSPCRINNGGCQDLCLLTHQGHVNCSCRGGRILQEDFTCRAVNSSCRAQDEFECANGECISFSLTCDGVSHCKDKSDEKPSYCNSRRCKKTFRQCNNGRCVSNMLWCNGVDDCGDGSDEIPCNKTACGVGEFRCRDGSCIGNSSRCNQFVDCEDASDEMNCSATDCSSYFRLGVKGVLFQPCERTSLCYAPSWVCDGANDCGDYSDERDCPGVKRPRCPLNYFACPSGRCIPMSWTCDKEDDCENGEDETHCNKFCSEAQFECQNHRCISKQWLCDGSDDCGDGSDEAAHCEGKTCGPSSFSCPGTHVCVPERWLCDGDKDCTDGADESVTAGCLYNSTCDDREFMCQNRLCIPKHFVCDHDRDCADGSDESPECEYPTCGPNEFRCANGRCLSSRQWECDGENDCHDHSDEAPKNPHCTSPEHKCNASSQFLCSSGRCVAEALLCNGQDDCGDGSDERGCHVNECLSRKLSGCSQDCEDLKIGFKCRCRPGFRLKDDGRTCADLDECSTTFPCSQLCINTHGSYKCLCVEGYAPRGGDPHSCKAVTDEEPFLIFANRYYLRKLNLDGSNYTLLKQGLNNAVALDFDYREQMIYWTDVTTQGSMIRRMHLNGSNVQVLHRTGLSNPDGLAVDWVGGNLYWCDKGRDTIEVSKLNGAYRTVLVSSGLREPRALVVDVQNGYLYWTDWGDHSLIGRIGMDGSGRSIIVDTKITWPNGLTVDYVTERIYWADAREDYIEFASLDGSNRHVVLSQDIPHIFALTLFEDYVYWTDWETKSINRAHKTTGANKTLLISTLHRPMDLHVFHALRQPDVPNHPCKVNNGGCSNLCLLSPGGGHKCACPTNFYLGGDGRTCVSNCTASQFVCKNDKCIPFWWKCDTEDDCGDHSDEPPDCPEFKCRPGQFQCSTGICTNPAFICDGDNDCQDNSDEANCDIHVCLPSQFKCTNTNRCIPGIFRCNGQDNCGDGEDERDCPEVTCAPNQFQCSITKRCIPRVWVCDRDNDCVDGSDEPANCTQMTCGVDEFRCKDSGRCIPARWKCDGEDDCGDGSDEPKEECDERTCEPYQFRCKNNRCVPGRWQCDYDNDCGDNSDEESCTPRPCSESEFSCANGRCIAGRWKCDGDHDCADGSDEKDCTPRCDMDQFQCKSGHCIPLRWRCDADADCMDGSDEEACGTGVRTCPLDEFQCNNTLCKPLAWKCDGEDDCGDNSDENPEECARFICPPNRPFRCKNDRVCLWIGRQCDGVDNCGDGTDEEDCEPPTAQNPHCKDKKEFLCRNQRCLSSSLRCNMFDDCGDGSDEEDCSIDPKLTSCATNASMCGDEARCVRTEKAAYCACRSGFHTVPGQPGCQDINECLRFGTCSQLCNNTKGGHLCSCARNFMKTHNTCKAEGSEYQVLYIADDNEIRSLFPGHPHSAYEQTFQGDESVRIDAMDVHVKAGRVYWTNWHTGTISYRSLPPAAPPTTSNRHRRQIDRGVTHLNISGLKMPRGIAIDWVAGNVYWTDSGRDVIEVAQMKGENRKTLISGMIDEPHAIVVDPLRGTMYWSDWGNHPKIETAAMDGTLRETLVQDNIQWPTGLAVDYHNERLYWADAKLSVIGSIRLNGTDPIVAADSKRGLSHPFSIDVFEDYIYGVTYINNRVFKIHKFGHSPLINLTGGLSHASDVVLYHQHKQPEVTNPCDRKKCEWLCLLSPSGPVCTCPNGKRLDNGTCVPVPSPTPPPDAPRPGTCTLQCFNGGSCFLNARRQPKCRCQPRYTGDKCELDQCWEYCHNGGTCAASPSGMPTCRCPTGFTGPKCTAQVCAGYCSNNSTCTVNQGNQPQCRCLPGFLGDRCQYRQCSGFCENFGTCQMAADGSRQCRCTVYFEGPRCEVNKCSRCLQGACVVNKQTGDVTCNCTDGRVAPSCLTCIDHCSNGGSCTMNSKMMPECQCPPHMTGPRCEEQVVSQQQPGHMASILIPLLLLLLLLLVAGVVFWYKRRVRGAKGFQHQRMTNGAMNVEIGNPTYKMYEGGEPDDVGGLLDADFALDPDKPTNFTNPVYATLYMGGHGSRHSLASTDEKRELLGRGPEDEIGDPLA</sequence>
<proteinExistence type="evidence at protein level"/>
<feature type="signal peptide" evidence="5">
    <location>
        <begin position="1"/>
        <end position="19"/>
    </location>
</feature>
<feature type="chain" id="PRO_0000273273" description="Prolow-density lipoprotein receptor-related protein 1">
    <location>
        <begin position="20"/>
        <end position="4545"/>
    </location>
</feature>
<feature type="chain" id="PRO_0000302753" description="Low-density lipoprotein receptor-related protein 1 515 kDa subunit">
    <location>
        <begin position="20"/>
        <end position="3944" status="uncertain"/>
    </location>
</feature>
<feature type="chain" id="PRO_0000302754" description="Low-density lipoprotein receptor-related protein 1 85 kDa subunit">
    <location>
        <begin position="3945" status="uncertain"/>
        <end position="4545"/>
    </location>
</feature>
<feature type="chain" id="PRO_0000302755" description="Low-density lipoprotein receptor-related protein 1 intracellular domain">
    <location>
        <begin position="4442" status="uncertain"/>
        <end position="4545"/>
    </location>
</feature>
<feature type="topological domain" description="Extracellular" evidence="5">
    <location>
        <begin position="20"/>
        <end position="4424"/>
    </location>
</feature>
<feature type="transmembrane region" description="Helical" evidence="5">
    <location>
        <begin position="4425"/>
        <end position="4445"/>
    </location>
</feature>
<feature type="topological domain" description="Cytoplasmic" evidence="5">
    <location>
        <begin position="4446"/>
        <end position="4545"/>
    </location>
</feature>
<feature type="domain" description="LDL-receptor class A 1" evidence="7">
    <location>
        <begin position="26"/>
        <end position="67"/>
    </location>
</feature>
<feature type="domain" description="LDL-receptor class A 2" evidence="7">
    <location>
        <begin position="71"/>
        <end position="111"/>
    </location>
</feature>
<feature type="domain" description="EGF-like 1" evidence="6">
    <location>
        <begin position="112"/>
        <end position="150"/>
    </location>
</feature>
<feature type="domain" description="EGF-like 2; calcium-binding" evidence="6">
    <location>
        <begin position="151"/>
        <end position="190"/>
    </location>
</feature>
<feature type="repeat" description="LDL-receptor class B 1" evidence="5">
    <location>
        <begin position="293"/>
        <end position="335"/>
    </location>
</feature>
<feature type="repeat" description="LDL-receptor class B 2" evidence="5">
    <location>
        <begin position="336"/>
        <end position="379"/>
    </location>
</feature>
<feature type="repeat" description="LDL-receptor class B 3" evidence="5">
    <location>
        <begin position="380"/>
        <end position="423"/>
    </location>
</feature>
<feature type="domain" description="EGF-like 3" evidence="6">
    <location>
        <begin position="475"/>
        <end position="521"/>
    </location>
</feature>
<feature type="repeat" description="LDL-receptor class B 4" evidence="5">
    <location>
        <begin position="572"/>
        <end position="614"/>
    </location>
</feature>
<feature type="repeat" description="LDL-receptor class B 5" evidence="5">
    <location>
        <begin position="615"/>
        <end position="660"/>
    </location>
</feature>
<feature type="repeat" description="LDL-receptor class B 6" evidence="5">
    <location>
        <begin position="661"/>
        <end position="711"/>
    </location>
</feature>
<feature type="repeat" description="LDL-receptor class B 7" evidence="5">
    <location>
        <begin position="712"/>
        <end position="755"/>
    </location>
</feature>
<feature type="domain" description="EGF-like 4" evidence="6">
    <location>
        <begin position="804"/>
        <end position="844"/>
    </location>
</feature>
<feature type="domain" description="LDL-receptor class A 3" evidence="7">
    <location>
        <begin position="853"/>
        <end position="893"/>
    </location>
</feature>
<feature type="domain" description="LDL-receptor class A 4" evidence="7">
    <location>
        <begin position="894"/>
        <end position="934"/>
    </location>
</feature>
<feature type="domain" description="LDL-receptor class A 5" evidence="7">
    <location>
        <begin position="935"/>
        <end position="974"/>
    </location>
</feature>
<feature type="domain" description="LDL-receptor class A 6" evidence="7">
    <location>
        <begin position="975"/>
        <end position="1014"/>
    </location>
</feature>
<feature type="domain" description="LDL-receptor class A 7" evidence="7">
    <location>
        <begin position="1014"/>
        <end position="1054"/>
    </location>
</feature>
<feature type="domain" description="LDL-receptor class A 8" evidence="7">
    <location>
        <begin position="1061"/>
        <end position="1100"/>
    </location>
</feature>
<feature type="domain" description="LDL-receptor class A 9" evidence="7">
    <location>
        <begin position="1103"/>
        <end position="1143"/>
    </location>
</feature>
<feature type="domain" description="LDL-receptor class A 10" evidence="7">
    <location>
        <begin position="1144"/>
        <end position="1183"/>
    </location>
</feature>
<feature type="domain" description="EGF-like 5" evidence="6">
    <location>
        <begin position="1184"/>
        <end position="1223"/>
    </location>
</feature>
<feature type="domain" description="EGF-like 6" evidence="6">
    <location>
        <begin position="1224"/>
        <end position="1263"/>
    </location>
</feature>
<feature type="repeat" description="LDL-receptor class B 8" evidence="5">
    <location>
        <begin position="1310"/>
        <end position="1356"/>
    </location>
</feature>
<feature type="repeat" description="LDL-receptor class B 9" evidence="5">
    <location>
        <begin position="1357"/>
        <end position="1399"/>
    </location>
</feature>
<feature type="repeat" description="LDL-receptor class B 10" evidence="5">
    <location>
        <begin position="1400"/>
        <end position="1446"/>
    </location>
</feature>
<feature type="repeat" description="LDL-receptor class B 11" evidence="5">
    <location>
        <begin position="1447"/>
        <end position="1491"/>
    </location>
</feature>
<feature type="repeat" description="LDL-receptor class B 12" evidence="5">
    <location>
        <begin position="1492"/>
        <end position="1532"/>
    </location>
</feature>
<feature type="domain" description="EGF-like 7" evidence="6">
    <location>
        <begin position="1537"/>
        <end position="1580"/>
    </location>
</feature>
<feature type="repeat" description="LDL-receptor class B 13" evidence="5">
    <location>
        <begin position="1628"/>
        <end position="1670"/>
    </location>
</feature>
<feature type="repeat" description="LDL-receptor class B 14" evidence="5">
    <location>
        <begin position="1671"/>
        <end position="1714"/>
    </location>
</feature>
<feature type="repeat" description="LDL-receptor class B 15" evidence="5">
    <location>
        <begin position="1715"/>
        <end position="1754"/>
    </location>
</feature>
<feature type="repeat" description="LDL-receptor class B 16" evidence="5">
    <location>
        <begin position="1755"/>
        <end position="1799"/>
    </location>
</feature>
<feature type="domain" description="EGF-like 8" evidence="6">
    <location>
        <begin position="1847"/>
        <end position="1888"/>
    </location>
</feature>
<feature type="repeat" description="LDL-receptor class B 17" evidence="5">
    <location>
        <begin position="1935"/>
        <end position="1977"/>
    </location>
</feature>
<feature type="repeat" description="LDL-receptor class B 18" evidence="5">
    <location>
        <begin position="1978"/>
        <end position="2020"/>
    </location>
</feature>
<feature type="repeat" description="LDL-receptor class B 19" evidence="5">
    <location>
        <begin position="2021"/>
        <end position="2064"/>
    </location>
</feature>
<feature type="repeat" description="LDL-receptor class B 20" evidence="5">
    <location>
        <begin position="2065"/>
        <end position="2108"/>
    </location>
</feature>
<feature type="domain" description="EGF-like 9" evidence="6">
    <location>
        <begin position="2156"/>
        <end position="2196"/>
    </location>
</feature>
<feature type="repeat" description="LDL-receptor class B 21" evidence="5">
    <location>
        <begin position="2254"/>
        <end position="2295"/>
    </location>
</feature>
<feature type="repeat" description="LDL-receptor class B 22" evidence="5">
    <location>
        <begin position="2296"/>
        <end position="2344"/>
    </location>
</feature>
<feature type="repeat" description="LDL-receptor class B 23" evidence="5">
    <location>
        <begin position="2345"/>
        <end position="2389"/>
    </location>
</feature>
<feature type="repeat" description="LDL-receptor class B 24" evidence="5">
    <location>
        <begin position="2390"/>
        <end position="2432"/>
    </location>
</feature>
<feature type="repeat" description="LDL-receptor class B 25" evidence="5">
    <location>
        <begin position="2433"/>
        <end position="2474"/>
    </location>
</feature>
<feature type="domain" description="EGF-like 10" evidence="6">
    <location>
        <begin position="2479"/>
        <end position="2519"/>
    </location>
</feature>
<feature type="domain" description="LDL-receptor class A 11" evidence="7">
    <location>
        <begin position="2523"/>
        <end position="2564"/>
    </location>
</feature>
<feature type="domain" description="LDL-receptor class A 12" evidence="7">
    <location>
        <begin position="2565"/>
        <end position="2603"/>
    </location>
</feature>
<feature type="domain" description="LDL-receptor class A 13" evidence="7">
    <location>
        <begin position="2604"/>
        <end position="2642"/>
    </location>
</feature>
<feature type="domain" description="LDL-receptor class A 14" evidence="7">
    <location>
        <begin position="2643"/>
        <end position="2691"/>
    </location>
</feature>
<feature type="domain" description="LDL-receptor class A 15" evidence="7">
    <location>
        <begin position="2695"/>
        <end position="2733"/>
    </location>
</feature>
<feature type="domain" description="LDL-receptor class A 16" evidence="7">
    <location>
        <begin position="2733"/>
        <end position="2772"/>
    </location>
</feature>
<feature type="domain" description="LDL-receptor class A 17" evidence="7">
    <location>
        <begin position="2773"/>
        <end position="2815"/>
    </location>
</feature>
<feature type="domain" description="LDL-receptor class A 18" evidence="7">
    <location>
        <begin position="2817"/>
        <end position="2856"/>
    </location>
</feature>
<feature type="domain" description="LDL-receptor class A 19" evidence="7">
    <location>
        <begin position="2857"/>
        <end position="2900"/>
    </location>
</feature>
<feature type="domain" description="LDL-receptor class A 20" evidence="7">
    <location>
        <begin position="2903"/>
        <end position="2941"/>
    </location>
</feature>
<feature type="domain" description="EGF-like 11" evidence="6">
    <location>
        <begin position="2942"/>
        <end position="2982"/>
    </location>
</feature>
<feature type="domain" description="EGF-like 12; calcium-binding" evidence="6">
    <location>
        <begin position="2983"/>
        <end position="3023"/>
    </location>
</feature>
<feature type="repeat" description="LDL-receptor class B 26" evidence="5">
    <location>
        <begin position="3070"/>
        <end position="3114"/>
    </location>
</feature>
<feature type="repeat" description="LDL-receptor class B 27" evidence="5">
    <location>
        <begin position="3115"/>
        <end position="3157"/>
    </location>
</feature>
<feature type="repeat" description="LDL-receptor class B 28" evidence="5">
    <location>
        <begin position="3158"/>
        <end position="3201"/>
    </location>
</feature>
<feature type="repeat" description="LDL-receptor class B 29" evidence="5">
    <location>
        <begin position="3202"/>
        <end position="3244"/>
    </location>
</feature>
<feature type="repeat" description="LDL-receptor class B 30" evidence="5">
    <location>
        <begin position="3245"/>
        <end position="3285"/>
    </location>
</feature>
<feature type="domain" description="EGF-like 13" evidence="6">
    <location>
        <begin position="3291"/>
        <end position="3332"/>
    </location>
</feature>
<feature type="domain" description="LDL-receptor class A 21" evidence="7">
    <location>
        <begin position="3333"/>
        <end position="3372"/>
    </location>
</feature>
<feature type="domain" description="LDL-receptor class A 22" evidence="7">
    <location>
        <begin position="3373"/>
        <end position="3411"/>
    </location>
</feature>
<feature type="domain" description="LDL-receptor class A 23" evidence="7">
    <location>
        <begin position="3412"/>
        <end position="3451"/>
    </location>
</feature>
<feature type="domain" description="LDL-receptor class A 24" evidence="7">
    <location>
        <begin position="3452"/>
        <end position="3492"/>
    </location>
</feature>
<feature type="domain" description="LDL-receptor class A 25" evidence="7">
    <location>
        <begin position="3493"/>
        <end position="3534"/>
    </location>
</feature>
<feature type="domain" description="LDL-receptor class A 26" evidence="7">
    <location>
        <begin position="3535"/>
        <end position="3573"/>
    </location>
</feature>
<feature type="domain" description="LDL-receptor class A 27" evidence="7">
    <location>
        <begin position="3574"/>
        <end position="3612"/>
    </location>
</feature>
<feature type="domain" description="LDL-receptor class A 28" evidence="7">
    <location>
        <begin position="3612"/>
        <end position="3650"/>
    </location>
</feature>
<feature type="domain" description="LDL-receptor class A 29" evidence="7">
    <location>
        <begin position="3653"/>
        <end position="3693"/>
    </location>
</feature>
<feature type="domain" description="LDL-receptor class A 30" evidence="7">
    <location>
        <begin position="3694"/>
        <end position="3734"/>
    </location>
</feature>
<feature type="domain" description="LDL-receptor class A 31" evidence="7">
    <location>
        <begin position="3740"/>
        <end position="3779"/>
    </location>
</feature>
<feature type="domain" description="EGF-like 14" evidence="6">
    <location>
        <begin position="3782"/>
        <end position="3824"/>
    </location>
</feature>
<feature type="domain" description="EGF-like 15" evidence="6">
    <location>
        <begin position="3825"/>
        <end position="3862"/>
    </location>
</feature>
<feature type="repeat" description="LDL-receptor class B 31" evidence="5">
    <location>
        <begin position="3913"/>
        <end position="3955"/>
    </location>
</feature>
<feature type="repeat" description="LDL-receptor class B 32" evidence="5">
    <location>
        <begin position="3971"/>
        <end position="4013"/>
    </location>
</feature>
<feature type="repeat" description="LDL-receptor class B 33" evidence="5">
    <location>
        <begin position="4014"/>
        <end position="4057"/>
    </location>
</feature>
<feature type="repeat" description="LDL-receptor class B 34" evidence="5">
    <location>
        <begin position="4058"/>
        <end position="4102"/>
    </location>
</feature>
<feature type="domain" description="EGF-like 16" evidence="6">
    <location>
        <begin position="4148"/>
        <end position="4184"/>
    </location>
</feature>
<feature type="domain" description="EGF-like 17" evidence="6">
    <location>
        <begin position="4197"/>
        <end position="4233"/>
    </location>
</feature>
<feature type="domain" description="EGF-like 18" evidence="6">
    <location>
        <begin position="4233"/>
        <end position="4269"/>
    </location>
</feature>
<feature type="domain" description="EGF-like 19" evidence="6">
    <location>
        <begin position="4269"/>
        <end position="4305"/>
    </location>
</feature>
<feature type="domain" description="EGF-like 20" evidence="6">
    <location>
        <begin position="4305"/>
        <end position="4341"/>
    </location>
</feature>
<feature type="domain" description="EGF-like 21" evidence="6">
    <location>
        <begin position="4341"/>
        <end position="4376"/>
    </location>
</feature>
<feature type="domain" description="EGF-like 22" evidence="6">
    <location>
        <begin position="4374"/>
        <end position="4410"/>
    </location>
</feature>
<feature type="region of interest" description="Interaction with MAFB" evidence="11">
    <location>
        <begin position="4446"/>
        <end position="4545"/>
    </location>
</feature>
<feature type="short sequence motif" description="Recognition site for proteolytical processing" evidence="5">
    <location>
        <begin position="3941"/>
        <end position="3944"/>
    </location>
</feature>
<feature type="short sequence motif" description="NPXY motif">
    <location>
        <begin position="4503"/>
        <end position="4508"/>
    </location>
</feature>
<feature type="binding site" evidence="4">
    <location>
        <position position="872"/>
    </location>
    <ligand>
        <name>Ca(2+)</name>
        <dbReference type="ChEBI" id="CHEBI:29108"/>
        <label>1</label>
    </ligand>
</feature>
<feature type="binding site" evidence="4">
    <location>
        <position position="875"/>
    </location>
    <ligand>
        <name>Ca(2+)</name>
        <dbReference type="ChEBI" id="CHEBI:29108"/>
        <label>1</label>
    </ligand>
</feature>
<feature type="binding site" evidence="4">
    <location>
        <position position="877"/>
    </location>
    <ligand>
        <name>Ca(2+)</name>
        <dbReference type="ChEBI" id="CHEBI:29108"/>
        <label>1</label>
    </ligand>
</feature>
<feature type="binding site" evidence="4">
    <location>
        <position position="879"/>
    </location>
    <ligand>
        <name>Ca(2+)</name>
        <dbReference type="ChEBI" id="CHEBI:29108"/>
        <label>1</label>
    </ligand>
</feature>
<feature type="binding site" evidence="4">
    <location>
        <position position="885"/>
    </location>
    <ligand>
        <name>Ca(2+)</name>
        <dbReference type="ChEBI" id="CHEBI:29108"/>
        <label>1</label>
    </ligand>
</feature>
<feature type="binding site" evidence="4">
    <location>
        <position position="886"/>
    </location>
    <ligand>
        <name>Ca(2+)</name>
        <dbReference type="ChEBI" id="CHEBI:29108"/>
        <label>1</label>
    </ligand>
</feature>
<feature type="binding site" evidence="4">
    <location>
        <position position="1033"/>
    </location>
    <ligand>
        <name>Ca(2+)</name>
        <dbReference type="ChEBI" id="CHEBI:29108"/>
        <label>2</label>
    </ligand>
</feature>
<feature type="binding site" evidence="4">
    <location>
        <position position="1036"/>
    </location>
    <ligand>
        <name>Ca(2+)</name>
        <dbReference type="ChEBI" id="CHEBI:29108"/>
        <label>2</label>
    </ligand>
</feature>
<feature type="binding site" evidence="4">
    <location>
        <position position="1038"/>
    </location>
    <ligand>
        <name>Ca(2+)</name>
        <dbReference type="ChEBI" id="CHEBI:29108"/>
        <label>2</label>
    </ligand>
</feature>
<feature type="binding site" evidence="4">
    <location>
        <position position="1040"/>
    </location>
    <ligand>
        <name>Ca(2+)</name>
        <dbReference type="ChEBI" id="CHEBI:29108"/>
        <label>2</label>
    </ligand>
</feature>
<feature type="binding site" evidence="4">
    <location>
        <position position="1046"/>
    </location>
    <ligand>
        <name>Ca(2+)</name>
        <dbReference type="ChEBI" id="CHEBI:29108"/>
        <label>2</label>
    </ligand>
</feature>
<feature type="binding site" evidence="4">
    <location>
        <position position="1047"/>
    </location>
    <ligand>
        <name>Ca(2+)</name>
        <dbReference type="ChEBI" id="CHEBI:29108"/>
        <label>2</label>
    </ligand>
</feature>
<feature type="binding site" evidence="4">
    <location>
        <position position="1081"/>
    </location>
    <ligand>
        <name>Ca(2+)</name>
        <dbReference type="ChEBI" id="CHEBI:29108"/>
        <label>3</label>
    </ligand>
</feature>
<feature type="binding site" evidence="4">
    <location>
        <position position="1084"/>
    </location>
    <ligand>
        <name>Ca(2+)</name>
        <dbReference type="ChEBI" id="CHEBI:29108"/>
        <label>3</label>
    </ligand>
</feature>
<feature type="binding site" evidence="4">
    <location>
        <position position="1086"/>
    </location>
    <ligand>
        <name>Ca(2+)</name>
        <dbReference type="ChEBI" id="CHEBI:29108"/>
        <label>3</label>
    </ligand>
</feature>
<feature type="binding site" evidence="4">
    <location>
        <position position="1088"/>
    </location>
    <ligand>
        <name>Ca(2+)</name>
        <dbReference type="ChEBI" id="CHEBI:29108"/>
        <label>3</label>
    </ligand>
</feature>
<feature type="binding site" evidence="4">
    <location>
        <position position="1094"/>
    </location>
    <ligand>
        <name>Ca(2+)</name>
        <dbReference type="ChEBI" id="CHEBI:29108"/>
        <label>3</label>
    </ligand>
</feature>
<feature type="binding site" evidence="4">
    <location>
        <position position="1095"/>
    </location>
    <ligand>
        <name>Ca(2+)</name>
        <dbReference type="ChEBI" id="CHEBI:29108"/>
        <label>3</label>
    </ligand>
</feature>
<feature type="modified residue" description="N6-acetyllysine" evidence="25">
    <location>
        <position position="2010"/>
    </location>
</feature>
<feature type="modified residue" description="Phosphothreonine" evidence="4">
    <location>
        <position position="4461"/>
    </location>
</feature>
<feature type="modified residue" description="Phosphotyrosine" evidence="4">
    <location>
        <position position="4508"/>
    </location>
</feature>
<feature type="modified residue" description="Phosphoserine" evidence="4">
    <location>
        <position position="4518"/>
    </location>
</feature>
<feature type="modified residue" description="Phosphoserine" evidence="4">
    <location>
        <position position="4521"/>
    </location>
</feature>
<feature type="modified residue" description="Phosphoserine" evidence="24">
    <location>
        <position position="4524"/>
    </location>
</feature>
<feature type="glycosylation site" description="N-linked (GlcNAc...) asparagine" evidence="5">
    <location>
        <position position="115"/>
    </location>
</feature>
<feature type="glycosylation site" description="N-linked (GlcNAc...) asparagine" evidence="5">
    <location>
        <position position="137"/>
    </location>
</feature>
<feature type="glycosylation site" description="N-linked (GlcNAc...) asparagine" evidence="5">
    <location>
        <position position="186"/>
    </location>
</feature>
<feature type="glycosylation site" description="N-linked (GlcNAc...) asparagine" evidence="5">
    <location>
        <position position="240"/>
    </location>
</feature>
<feature type="glycosylation site" description="N-linked (GlcNAc...) asparagine" evidence="5">
    <location>
        <position position="275"/>
    </location>
</feature>
<feature type="glycosylation site" description="N-linked (GlcNAc...) asparagine" evidence="5">
    <location>
        <position position="358"/>
    </location>
</feature>
<feature type="glycosylation site" description="N-linked (GlcNAc...) asparagine" evidence="14">
    <location>
        <position position="447"/>
    </location>
</feature>
<feature type="glycosylation site" description="N-linked (GlcNAc...) asparagine" evidence="15">
    <location>
        <position position="730"/>
    </location>
</feature>
<feature type="glycosylation site" description="N-linked (GlcNAc...) asparagine" evidence="5">
    <location>
        <position position="929"/>
    </location>
</feature>
<feature type="glycosylation site" description="N-linked (GlcNAc...) asparagine" evidence="5">
    <location>
        <position position="1051"/>
    </location>
</feature>
<feature type="glycosylation site" description="N-linked (GlcNAc...) asparagine" evidence="5">
    <location>
        <position position="1155"/>
    </location>
</feature>
<feature type="glycosylation site" description="N-linked (GlcNAc...) asparagine" evidence="5">
    <location>
        <position position="1156"/>
    </location>
</feature>
<feature type="glycosylation site" description="N-linked (GlcNAc...) asparagine" evidence="5">
    <location>
        <position position="1196"/>
    </location>
</feature>
<feature type="glycosylation site" description="N-linked (GlcNAc...) asparagine" evidence="5">
    <location>
        <position position="1219"/>
    </location>
</feature>
<feature type="glycosylation site" description="N-linked (GlcNAc...) asparagine" evidence="5">
    <location>
        <position position="1512"/>
    </location>
</feature>
<feature type="glycosylation site" description="N-linked (GlcNAc...) asparagine" evidence="5">
    <location>
        <position position="1559"/>
    </location>
</feature>
<feature type="glycosylation site" description="N-linked (GlcNAc...) asparagine" evidence="5">
    <location>
        <position position="1576"/>
    </location>
</feature>
<feature type="glycosylation site" description="N-linked (GlcNAc...) asparagine" evidence="5">
    <location>
        <position position="1617"/>
    </location>
</feature>
<feature type="glycosylation site" description="N-linked (GlcNAc...) asparagine" evidence="5">
    <location>
        <position position="1646"/>
    </location>
</feature>
<feature type="glycosylation site" description="N-linked (GlcNAc...) asparagine" evidence="5">
    <location>
        <position position="1724"/>
    </location>
</feature>
<feature type="glycosylation site" description="N-linked (GlcNAc...) asparagine" evidence="5">
    <location>
        <position position="1734"/>
    </location>
</feature>
<feature type="glycosylation site" description="N-linked (GlcNAc...) asparagine" evidence="5">
    <location>
        <position position="1764"/>
    </location>
</feature>
<feature type="glycosylation site" description="N-linked (GlcNAc...) asparagine" evidence="5">
    <location>
        <position position="1826"/>
    </location>
</feature>
<feature type="glycosylation site" description="N-linked (GlcNAc...) asparagine" evidence="5">
    <location>
        <position position="1934"/>
    </location>
</feature>
<feature type="glycosylation site" description="N-linked (GlcNAc...) asparagine" evidence="5">
    <location>
        <position position="1996"/>
    </location>
</feature>
<feature type="glycosylation site" description="N-linked (GlcNAc...) asparagine" evidence="5">
    <location>
        <position position="2049"/>
    </location>
</feature>
<feature type="glycosylation site" description="N-linked (GlcNAc...) asparagine" evidence="5">
    <location>
        <position position="2118"/>
    </location>
</feature>
<feature type="glycosylation site" description="N-linked (GlcNAc...) asparagine" evidence="15">
    <location>
        <position position="2128"/>
    </location>
</feature>
<feature type="glycosylation site" description="N-linked (GlcNAc...) asparagine" evidence="5">
    <location>
        <position position="2473"/>
    </location>
</feature>
<feature type="glycosylation site" description="N-linked (GlcNAc...) asparagine" evidence="5">
    <location>
        <position position="2503"/>
    </location>
</feature>
<feature type="glycosylation site" description="N-linked (GlcNAc...) asparagine" evidence="5">
    <location>
        <position position="2522"/>
    </location>
</feature>
<feature type="glycosylation site" description="N-linked (GlcNAc...) asparagine" evidence="5">
    <location>
        <position position="2602"/>
    </location>
</feature>
<feature type="glycosylation site" description="N-linked (GlcNAc...) asparagine" evidence="5">
    <location>
        <position position="2621"/>
    </location>
</feature>
<feature type="glycosylation site" description="N-linked (GlcNAc...) asparagine" evidence="5">
    <location>
        <position position="2639"/>
    </location>
</feature>
<feature type="glycosylation site" description="N-linked (GlcNAc...) asparagine" evidence="5">
    <location>
        <position position="2816"/>
    </location>
</feature>
<feature type="glycosylation site" description="N-linked (GlcNAc...) asparagine" evidence="5">
    <location>
        <position position="2906"/>
    </location>
</feature>
<feature type="glycosylation site" description="N-linked (GlcNAc...) asparagine" evidence="15">
    <location>
        <position position="3049"/>
    </location>
</feature>
<feature type="glycosylation site" description="N-linked (GlcNAc...) asparagine" evidence="5">
    <location>
        <position position="3090"/>
    </location>
</feature>
<feature type="glycosylation site" description="N-linked (GlcNAc...) asparagine" evidence="5">
    <location>
        <position position="3265"/>
    </location>
</feature>
<feature type="glycosylation site" description="N-linked (GlcNAc...) asparagine" evidence="5">
    <location>
        <position position="3334"/>
    </location>
</feature>
<feature type="glycosylation site" description="N-linked (GlcNAc...) asparagine" evidence="5">
    <location>
        <position position="3489"/>
    </location>
</feature>
<feature type="glycosylation site" description="N-linked (GlcNAc...) asparagine" evidence="5">
    <location>
        <position position="3663"/>
    </location>
</feature>
<feature type="glycosylation site" description="N-linked (GlcNAc...) asparagine" evidence="5">
    <location>
        <position position="3789"/>
    </location>
</feature>
<feature type="glycosylation site" description="N-linked (GlcNAc...) asparagine" evidence="5">
    <location>
        <position position="3840"/>
    </location>
</feature>
<feature type="glycosylation site" description="N-linked (GlcNAc...) asparagine" evidence="5">
    <location>
        <position position="3954"/>
    </location>
</feature>
<feature type="glycosylation site" description="N-linked (GlcNAc...) asparagine" evidence="5">
    <location>
        <position position="4076"/>
    </location>
</feature>
<feature type="glycosylation site" description="N-linked (GlcNAc...) asparagine" evidence="5">
    <location>
        <position position="4126"/>
    </location>
</feature>
<feature type="glycosylation site" description="N-linked (GlcNAc...) asparagine" evidence="5">
    <location>
        <position position="4180"/>
    </location>
</feature>
<feature type="glycosylation site" description="N-linked (GlcNAc...) asparagine" evidence="5">
    <location>
        <position position="4279"/>
    </location>
</feature>
<feature type="glycosylation site" description="N-linked (GlcNAc...) asparagine" evidence="5">
    <location>
        <position position="4280"/>
    </location>
</feature>
<feature type="glycosylation site" description="N-linked (GlcNAc...) asparagine" evidence="5">
    <location>
        <position position="4365"/>
    </location>
</feature>
<feature type="disulfide bond" evidence="3">
    <location>
        <begin position="28"/>
        <end position="41"/>
    </location>
</feature>
<feature type="disulfide bond" evidence="3">
    <location>
        <begin position="35"/>
        <end position="54"/>
    </location>
</feature>
<feature type="disulfide bond" evidence="3">
    <location>
        <begin position="48"/>
        <end position="65"/>
    </location>
</feature>
<feature type="disulfide bond" evidence="3">
    <location>
        <begin position="73"/>
        <end position="86"/>
    </location>
</feature>
<feature type="disulfide bond" evidence="3">
    <location>
        <begin position="80"/>
        <end position="99"/>
    </location>
</feature>
<feature type="disulfide bond" evidence="3">
    <location>
        <begin position="93"/>
        <end position="109"/>
    </location>
</feature>
<feature type="disulfide bond" evidence="3">
    <location>
        <begin position="116"/>
        <end position="125"/>
    </location>
</feature>
<feature type="disulfide bond" evidence="3">
    <location>
        <begin position="121"/>
        <end position="134"/>
    </location>
</feature>
<feature type="disulfide bond" evidence="3">
    <location>
        <begin position="136"/>
        <end position="149"/>
    </location>
</feature>
<feature type="disulfide bond" evidence="3">
    <location>
        <begin position="155"/>
        <end position="165"/>
    </location>
</feature>
<feature type="disulfide bond" evidence="3">
    <location>
        <begin position="161"/>
        <end position="174"/>
    </location>
</feature>
<feature type="disulfide bond" evidence="3">
    <location>
        <begin position="176"/>
        <end position="189"/>
    </location>
</feature>
<feature type="disulfide bond" evidence="3">
    <location>
        <begin position="479"/>
        <end position="494"/>
    </location>
</feature>
<feature type="disulfide bond" evidence="3">
    <location>
        <begin position="490"/>
        <end position="505"/>
    </location>
</feature>
<feature type="disulfide bond" evidence="3">
    <location>
        <begin position="507"/>
        <end position="520"/>
    </location>
</feature>
<feature type="disulfide bond" evidence="3">
    <location>
        <begin position="808"/>
        <end position="819"/>
    </location>
</feature>
<feature type="disulfide bond" evidence="3">
    <location>
        <begin position="815"/>
        <end position="828"/>
    </location>
</feature>
<feature type="disulfide bond" evidence="3">
    <location>
        <begin position="830"/>
        <end position="843"/>
    </location>
</feature>
<feature type="disulfide bond" evidence="4">
    <location>
        <begin position="855"/>
        <end position="867"/>
    </location>
</feature>
<feature type="disulfide bond" evidence="4">
    <location>
        <begin position="862"/>
        <end position="880"/>
    </location>
</feature>
<feature type="disulfide bond" evidence="4">
    <location>
        <begin position="874"/>
        <end position="891"/>
    </location>
</feature>
<feature type="disulfide bond" evidence="3">
    <location>
        <begin position="896"/>
        <end position="908"/>
    </location>
</feature>
<feature type="disulfide bond" evidence="3">
    <location>
        <begin position="903"/>
        <end position="921"/>
    </location>
</feature>
<feature type="disulfide bond" evidence="3">
    <location>
        <begin position="915"/>
        <end position="932"/>
    </location>
</feature>
<feature type="disulfide bond" evidence="3">
    <location>
        <begin position="937"/>
        <end position="949"/>
    </location>
</feature>
<feature type="disulfide bond" evidence="3">
    <location>
        <begin position="944"/>
        <end position="962"/>
    </location>
</feature>
<feature type="disulfide bond" evidence="3">
    <location>
        <begin position="956"/>
        <end position="972"/>
    </location>
</feature>
<feature type="disulfide bond" evidence="3">
    <location>
        <begin position="977"/>
        <end position="990"/>
    </location>
</feature>
<feature type="disulfide bond" evidence="3">
    <location>
        <begin position="985"/>
        <end position="1003"/>
    </location>
</feature>
<feature type="disulfide bond" evidence="3">
    <location>
        <begin position="997"/>
        <end position="1012"/>
    </location>
</feature>
<feature type="disulfide bond" evidence="3">
    <location>
        <begin position="1016"/>
        <end position="1028"/>
    </location>
</feature>
<feature type="disulfide bond" evidence="3">
    <location>
        <begin position="1023"/>
        <end position="1041"/>
    </location>
</feature>
<feature type="disulfide bond" evidence="3">
    <location>
        <begin position="1035"/>
        <end position="1052"/>
    </location>
</feature>
<feature type="disulfide bond" evidence="4">
    <location>
        <begin position="1063"/>
        <end position="1076"/>
    </location>
</feature>
<feature type="disulfide bond" evidence="4">
    <location>
        <begin position="1070"/>
        <end position="1089"/>
    </location>
</feature>
<feature type="disulfide bond" evidence="4">
    <location>
        <begin position="1083"/>
        <end position="1098"/>
    </location>
</feature>
<feature type="disulfide bond" evidence="3">
    <location>
        <begin position="1105"/>
        <end position="1119"/>
    </location>
</feature>
<feature type="disulfide bond" evidence="3">
    <location>
        <begin position="1113"/>
        <end position="1132"/>
    </location>
</feature>
<feature type="disulfide bond" evidence="3">
    <location>
        <begin position="1126"/>
        <end position="1141"/>
    </location>
</feature>
<feature type="disulfide bond" evidence="3">
    <location>
        <begin position="1146"/>
        <end position="1160"/>
    </location>
</feature>
<feature type="disulfide bond" evidence="3">
    <location>
        <begin position="1153"/>
        <end position="1173"/>
    </location>
</feature>
<feature type="disulfide bond" evidence="3">
    <location>
        <begin position="1167"/>
        <end position="1183"/>
    </location>
</feature>
<feature type="disulfide bond" evidence="3">
    <location>
        <begin position="1186"/>
        <end position="1197"/>
    </location>
</feature>
<feature type="disulfide bond" evidence="3">
    <location>
        <begin position="1193"/>
        <end position="1207"/>
    </location>
</feature>
<feature type="disulfide bond" evidence="3">
    <location>
        <begin position="1209"/>
        <end position="1222"/>
    </location>
</feature>
<feature type="disulfide bond" evidence="3">
    <location>
        <begin position="1228"/>
        <end position="1238"/>
    </location>
</feature>
<feature type="disulfide bond" evidence="3">
    <location>
        <begin position="1234"/>
        <end position="1247"/>
    </location>
</feature>
<feature type="disulfide bond" evidence="3">
    <location>
        <begin position="1249"/>
        <end position="1262"/>
    </location>
</feature>
<feature type="disulfide bond" evidence="3">
    <location>
        <begin position="1541"/>
        <end position="1554"/>
    </location>
</feature>
<feature type="disulfide bond" evidence="3">
    <location>
        <begin position="1550"/>
        <end position="1564"/>
    </location>
</feature>
<feature type="disulfide bond" evidence="3">
    <location>
        <begin position="1566"/>
        <end position="1579"/>
    </location>
</feature>
<feature type="disulfide bond" evidence="3">
    <location>
        <begin position="1851"/>
        <end position="1862"/>
    </location>
</feature>
<feature type="disulfide bond" evidence="3">
    <location>
        <begin position="1858"/>
        <end position="1872"/>
    </location>
</feature>
<feature type="disulfide bond" evidence="3">
    <location>
        <begin position="1874"/>
        <end position="1887"/>
    </location>
</feature>
<feature type="disulfide bond" evidence="3">
    <location>
        <begin position="2160"/>
        <end position="2171"/>
    </location>
</feature>
<feature type="disulfide bond" evidence="3">
    <location>
        <begin position="2167"/>
        <end position="2181"/>
    </location>
</feature>
<feature type="disulfide bond" evidence="3">
    <location>
        <begin position="2183"/>
        <end position="2195"/>
    </location>
</feature>
<feature type="disulfide bond" evidence="3">
    <location>
        <begin position="2483"/>
        <end position="2494"/>
    </location>
</feature>
<feature type="disulfide bond" evidence="3">
    <location>
        <begin position="2490"/>
        <end position="2504"/>
    </location>
</feature>
<feature type="disulfide bond" evidence="3">
    <location>
        <begin position="2506"/>
        <end position="2518"/>
    </location>
</feature>
<feature type="disulfide bond" evidence="3">
    <location>
        <begin position="2525"/>
        <end position="2538"/>
    </location>
</feature>
<feature type="disulfide bond" evidence="3">
    <location>
        <begin position="2533"/>
        <end position="2551"/>
    </location>
</feature>
<feature type="disulfide bond" evidence="3">
    <location>
        <begin position="2545"/>
        <end position="2562"/>
    </location>
</feature>
<feature type="disulfide bond" evidence="3">
    <location>
        <begin position="2567"/>
        <end position="2579"/>
    </location>
</feature>
<feature type="disulfide bond" evidence="3">
    <location>
        <begin position="2574"/>
        <end position="2592"/>
    </location>
</feature>
<feature type="disulfide bond" evidence="3">
    <location>
        <begin position="2586"/>
        <end position="2601"/>
    </location>
</feature>
<feature type="disulfide bond" evidence="3">
    <location>
        <begin position="2606"/>
        <end position="2618"/>
    </location>
</feature>
<feature type="disulfide bond" evidence="3">
    <location>
        <begin position="2613"/>
        <end position="2631"/>
    </location>
</feature>
<feature type="disulfide bond" evidence="3">
    <location>
        <begin position="2625"/>
        <end position="2640"/>
    </location>
</feature>
<feature type="disulfide bond" evidence="3">
    <location>
        <begin position="2645"/>
        <end position="2667"/>
    </location>
</feature>
<feature type="disulfide bond" evidence="3">
    <location>
        <begin position="2661"/>
        <end position="2680"/>
    </location>
</feature>
<feature type="disulfide bond" evidence="3">
    <location>
        <begin position="2674"/>
        <end position="2689"/>
    </location>
</feature>
<feature type="disulfide bond" evidence="3">
    <location>
        <begin position="2697"/>
        <end position="2709"/>
    </location>
</feature>
<feature type="disulfide bond" evidence="3">
    <location>
        <begin position="2704"/>
        <end position="2722"/>
    </location>
</feature>
<feature type="disulfide bond" evidence="3">
    <location>
        <begin position="2716"/>
        <end position="2731"/>
    </location>
</feature>
<feature type="disulfide bond" evidence="3">
    <location>
        <begin position="2735"/>
        <end position="2747"/>
    </location>
</feature>
<feature type="disulfide bond" evidence="3">
    <location>
        <begin position="2742"/>
        <end position="2760"/>
    </location>
</feature>
<feature type="disulfide bond" evidence="3">
    <location>
        <begin position="2754"/>
        <end position="2770"/>
    </location>
</feature>
<feature type="disulfide bond" evidence="3">
    <location>
        <begin position="2775"/>
        <end position="2788"/>
    </location>
</feature>
<feature type="disulfide bond" evidence="3">
    <location>
        <begin position="2782"/>
        <end position="2801"/>
    </location>
</feature>
<feature type="disulfide bond" evidence="3">
    <location>
        <begin position="2795"/>
        <end position="2813"/>
    </location>
</feature>
<feature type="disulfide bond" evidence="3">
    <location>
        <begin position="2819"/>
        <end position="2831"/>
    </location>
</feature>
<feature type="disulfide bond" evidence="3">
    <location>
        <begin position="2826"/>
        <end position="2844"/>
    </location>
</feature>
<feature type="disulfide bond" evidence="3">
    <location>
        <begin position="2838"/>
        <end position="2854"/>
    </location>
</feature>
<feature type="disulfide bond" evidence="3">
    <location>
        <begin position="2859"/>
        <end position="2871"/>
    </location>
</feature>
<feature type="disulfide bond" evidence="3">
    <location>
        <begin position="2866"/>
        <end position="2885"/>
    </location>
</feature>
<feature type="disulfide bond" evidence="3">
    <location>
        <begin position="2879"/>
        <end position="2898"/>
    </location>
</feature>
<feature type="disulfide bond" evidence="3">
    <location>
        <begin position="2905"/>
        <end position="2918"/>
    </location>
</feature>
<feature type="disulfide bond" evidence="3">
    <location>
        <begin position="2913"/>
        <end position="2931"/>
    </location>
</feature>
<feature type="disulfide bond" evidence="3">
    <location>
        <begin position="2925"/>
        <end position="2940"/>
    </location>
</feature>
<feature type="disulfide bond" evidence="3">
    <location>
        <begin position="2945"/>
        <end position="2957"/>
    </location>
</feature>
<feature type="disulfide bond" evidence="3">
    <location>
        <begin position="2953"/>
        <end position="2966"/>
    </location>
</feature>
<feature type="disulfide bond" evidence="3">
    <location>
        <begin position="2968"/>
        <end position="2981"/>
    </location>
</feature>
<feature type="disulfide bond" evidence="3">
    <location>
        <begin position="2987"/>
        <end position="2997"/>
    </location>
</feature>
<feature type="disulfide bond" evidence="3">
    <location>
        <begin position="2993"/>
        <end position="3006"/>
    </location>
</feature>
<feature type="disulfide bond" evidence="3">
    <location>
        <begin position="3008"/>
        <end position="3022"/>
    </location>
</feature>
<feature type="disulfide bond" evidence="3">
    <location>
        <begin position="3295"/>
        <end position="3306"/>
    </location>
</feature>
<feature type="disulfide bond" evidence="3">
    <location>
        <begin position="3302"/>
        <end position="3316"/>
    </location>
</feature>
<feature type="disulfide bond" evidence="3">
    <location>
        <begin position="3318"/>
        <end position="3331"/>
    </location>
</feature>
<feature type="disulfide bond" evidence="3">
    <location>
        <begin position="3335"/>
        <end position="3347"/>
    </location>
</feature>
<feature type="disulfide bond" evidence="3">
    <location>
        <begin position="3342"/>
        <end position="3360"/>
    </location>
</feature>
<feature type="disulfide bond" evidence="3">
    <location>
        <begin position="3354"/>
        <end position="3370"/>
    </location>
</feature>
<feature type="disulfide bond" evidence="3">
    <location>
        <begin position="3375"/>
        <end position="3387"/>
    </location>
</feature>
<feature type="disulfide bond" evidence="3">
    <location>
        <begin position="3382"/>
        <end position="3400"/>
    </location>
</feature>
<feature type="disulfide bond" evidence="3">
    <location>
        <begin position="3394"/>
        <end position="3409"/>
    </location>
</feature>
<feature type="disulfide bond" evidence="3">
    <location>
        <begin position="3414"/>
        <end position="3427"/>
    </location>
</feature>
<feature type="disulfide bond" evidence="3">
    <location>
        <begin position="3421"/>
        <end position="3440"/>
    </location>
</feature>
<feature type="disulfide bond" evidence="3">
    <location>
        <begin position="3434"/>
        <end position="3449"/>
    </location>
</feature>
<feature type="disulfide bond" evidence="3">
    <location>
        <begin position="3454"/>
        <end position="3467"/>
    </location>
</feature>
<feature type="disulfide bond" evidence="3">
    <location>
        <begin position="3461"/>
        <end position="3480"/>
    </location>
</feature>
<feature type="disulfide bond" evidence="3">
    <location>
        <begin position="3474"/>
        <end position="3490"/>
    </location>
</feature>
<feature type="disulfide bond" evidence="3">
    <location>
        <begin position="3495"/>
        <end position="3508"/>
    </location>
</feature>
<feature type="disulfide bond" evidence="3">
    <location>
        <begin position="3502"/>
        <end position="3521"/>
    </location>
</feature>
<feature type="disulfide bond" evidence="3">
    <location>
        <begin position="3515"/>
        <end position="3532"/>
    </location>
</feature>
<feature type="disulfide bond" evidence="3">
    <location>
        <begin position="3537"/>
        <end position="3549"/>
    </location>
</feature>
<feature type="disulfide bond" evidence="3">
    <location>
        <begin position="3544"/>
        <end position="3562"/>
    </location>
</feature>
<feature type="disulfide bond" evidence="3">
    <location>
        <begin position="3556"/>
        <end position="3571"/>
    </location>
</feature>
<feature type="disulfide bond" evidence="3">
    <location>
        <begin position="3576"/>
        <end position="3588"/>
    </location>
</feature>
<feature type="disulfide bond" evidence="3">
    <location>
        <begin position="3583"/>
        <end position="3601"/>
    </location>
</feature>
<feature type="disulfide bond" evidence="3">
    <location>
        <begin position="3595"/>
        <end position="3610"/>
    </location>
</feature>
<feature type="disulfide bond" evidence="3">
    <location>
        <begin position="3614"/>
        <end position="3626"/>
    </location>
</feature>
<feature type="disulfide bond" evidence="3">
    <location>
        <begin position="3621"/>
        <end position="3639"/>
    </location>
</feature>
<feature type="disulfide bond" evidence="3">
    <location>
        <begin position="3633"/>
        <end position="3648"/>
    </location>
</feature>
<feature type="disulfide bond" evidence="3">
    <location>
        <begin position="3655"/>
        <end position="3667"/>
    </location>
</feature>
<feature type="disulfide bond" evidence="3">
    <location>
        <begin position="3662"/>
        <end position="3680"/>
    </location>
</feature>
<feature type="disulfide bond" evidence="3">
    <location>
        <begin position="3674"/>
        <end position="3691"/>
    </location>
</feature>
<feature type="disulfide bond" evidence="3">
    <location>
        <begin position="3696"/>
        <end position="3710"/>
    </location>
</feature>
<feature type="disulfide bond" evidence="3">
    <location>
        <begin position="3704"/>
        <end position="3723"/>
    </location>
</feature>
<feature type="disulfide bond" evidence="3">
    <location>
        <begin position="3717"/>
        <end position="3732"/>
    </location>
</feature>
<feature type="disulfide bond" evidence="3">
    <location>
        <begin position="3742"/>
        <end position="3755"/>
    </location>
</feature>
<feature type="disulfide bond" evidence="3">
    <location>
        <begin position="3750"/>
        <end position="3768"/>
    </location>
</feature>
<feature type="disulfide bond" evidence="3">
    <location>
        <begin position="3762"/>
        <end position="3777"/>
    </location>
</feature>
<feature type="disulfide bond" evidence="3">
    <location>
        <begin position="3786"/>
        <end position="3799"/>
    </location>
</feature>
<feature type="disulfide bond" evidence="3">
    <location>
        <begin position="3793"/>
        <end position="3808"/>
    </location>
</feature>
<feature type="disulfide bond" evidence="3">
    <location>
        <begin position="3810"/>
        <end position="3823"/>
    </location>
</feature>
<feature type="disulfide bond" evidence="3">
    <location>
        <begin position="3829"/>
        <end position="3839"/>
    </location>
</feature>
<feature type="disulfide bond" evidence="3">
    <location>
        <begin position="3835"/>
        <end position="3848"/>
    </location>
</feature>
<feature type="disulfide bond" evidence="3">
    <location>
        <begin position="3850"/>
        <end position="3861"/>
    </location>
</feature>
<feature type="disulfide bond" evidence="3">
    <location>
        <begin position="4152"/>
        <end position="4161"/>
    </location>
</feature>
<feature type="disulfide bond" evidence="3">
    <location>
        <begin position="4157"/>
        <end position="4170"/>
    </location>
</feature>
<feature type="disulfide bond" evidence="3">
    <location>
        <begin position="4172"/>
        <end position="4183"/>
    </location>
</feature>
<feature type="disulfide bond" evidence="3">
    <location>
        <begin position="4201"/>
        <end position="4211"/>
    </location>
</feature>
<feature type="disulfide bond" evidence="3">
    <location>
        <begin position="4205"/>
        <end position="4221"/>
    </location>
</feature>
<feature type="disulfide bond" evidence="3">
    <location>
        <begin position="4223"/>
        <end position="4232"/>
    </location>
</feature>
<feature type="disulfide bond" evidence="3">
    <location>
        <begin position="4237"/>
        <end position="4247"/>
    </location>
</feature>
<feature type="disulfide bond" evidence="3">
    <location>
        <begin position="4241"/>
        <end position="4257"/>
    </location>
</feature>
<feature type="disulfide bond" evidence="3">
    <location>
        <begin position="4259"/>
        <end position="4268"/>
    </location>
</feature>
<feature type="disulfide bond" evidence="3">
    <location>
        <begin position="4273"/>
        <end position="4283"/>
    </location>
</feature>
<feature type="disulfide bond" evidence="3">
    <location>
        <begin position="4277"/>
        <end position="4293"/>
    </location>
</feature>
<feature type="disulfide bond" evidence="3">
    <location>
        <begin position="4295"/>
        <end position="4304"/>
    </location>
</feature>
<feature type="disulfide bond" evidence="3">
    <location>
        <begin position="4309"/>
        <end position="4319"/>
    </location>
</feature>
<feature type="disulfide bond" evidence="3">
    <location>
        <begin position="4313"/>
        <end position="4329"/>
    </location>
</feature>
<feature type="disulfide bond" evidence="3">
    <location>
        <begin position="4331"/>
        <end position="4340"/>
    </location>
</feature>
<feature type="disulfide bond" evidence="3">
    <location>
        <begin position="4345"/>
        <end position="4353"/>
    </location>
</feature>
<feature type="disulfide bond" evidence="3">
    <location>
        <begin position="4348"/>
        <end position="4364"/>
    </location>
</feature>
<feature type="disulfide bond" evidence="3">
    <location>
        <begin position="4366"/>
        <end position="4375"/>
    </location>
</feature>
<feature type="disulfide bond" evidence="3">
    <location>
        <begin position="4378"/>
        <end position="4388"/>
    </location>
</feature>
<feature type="disulfide bond" evidence="3">
    <location>
        <begin position="4382"/>
        <end position="4398"/>
    </location>
</feature>
<feature type="disulfide bond" evidence="3">
    <location>
        <begin position="4400"/>
        <end position="4409"/>
    </location>
</feature>
<feature type="sequence conflict" description="In Ref. 2; AAL09567." evidence="19" ref="2">
    <original>A</original>
    <variation>T</variation>
    <location>
        <position position="2642"/>
    </location>
</feature>
<organism>
    <name type="scientific">Mus musculus</name>
    <name type="common">Mouse</name>
    <dbReference type="NCBI Taxonomy" id="10090"/>
    <lineage>
        <taxon>Eukaryota</taxon>
        <taxon>Metazoa</taxon>
        <taxon>Chordata</taxon>
        <taxon>Craniata</taxon>
        <taxon>Vertebrata</taxon>
        <taxon>Euteleostomi</taxon>
        <taxon>Mammalia</taxon>
        <taxon>Eutheria</taxon>
        <taxon>Euarchontoglires</taxon>
        <taxon>Glires</taxon>
        <taxon>Rodentia</taxon>
        <taxon>Myomorpha</taxon>
        <taxon>Muroidea</taxon>
        <taxon>Muridae</taxon>
        <taxon>Murinae</taxon>
        <taxon>Mus</taxon>
        <taxon>Mus</taxon>
    </lineage>
</organism>
<accession>Q91ZX7</accession>
<accession>Q61291</accession>
<accession>Q920Y4</accession>
<dbReference type="EMBL" id="X67469">
    <property type="protein sequence ID" value="CAA47817.1"/>
    <property type="status" value="ALT_SEQ"/>
    <property type="molecule type" value="mRNA"/>
</dbReference>
<dbReference type="EMBL" id="AF367720">
    <property type="protein sequence ID" value="AAL09566.1"/>
    <property type="molecule type" value="mRNA"/>
</dbReference>
<dbReference type="EMBL" id="AF369477">
    <property type="protein sequence ID" value="AAL09567.1"/>
    <property type="molecule type" value="Genomic_DNA"/>
</dbReference>
<dbReference type="EMBL" id="AF369389">
    <property type="protein sequence ID" value="AAL09567.1"/>
    <property type="status" value="JOINED"/>
    <property type="molecule type" value="Genomic_DNA"/>
</dbReference>
<dbReference type="EMBL" id="AF369390">
    <property type="protein sequence ID" value="AAL09567.1"/>
    <property type="status" value="JOINED"/>
    <property type="molecule type" value="Genomic_DNA"/>
</dbReference>
<dbReference type="EMBL" id="AF369391">
    <property type="protein sequence ID" value="AAL09567.1"/>
    <property type="status" value="JOINED"/>
    <property type="molecule type" value="Genomic_DNA"/>
</dbReference>
<dbReference type="EMBL" id="AF369392">
    <property type="protein sequence ID" value="AAL09567.1"/>
    <property type="status" value="JOINED"/>
    <property type="molecule type" value="Genomic_DNA"/>
</dbReference>
<dbReference type="EMBL" id="AF369393">
    <property type="protein sequence ID" value="AAL09567.1"/>
    <property type="status" value="JOINED"/>
    <property type="molecule type" value="Genomic_DNA"/>
</dbReference>
<dbReference type="EMBL" id="AF369394">
    <property type="protein sequence ID" value="AAL09567.1"/>
    <property type="status" value="JOINED"/>
    <property type="molecule type" value="Genomic_DNA"/>
</dbReference>
<dbReference type="EMBL" id="AF369395">
    <property type="protein sequence ID" value="AAL09567.1"/>
    <property type="status" value="JOINED"/>
    <property type="molecule type" value="Genomic_DNA"/>
</dbReference>
<dbReference type="EMBL" id="AF369396">
    <property type="protein sequence ID" value="AAL09567.1"/>
    <property type="status" value="JOINED"/>
    <property type="molecule type" value="Genomic_DNA"/>
</dbReference>
<dbReference type="EMBL" id="AF369397">
    <property type="protein sequence ID" value="AAL09567.1"/>
    <property type="status" value="JOINED"/>
    <property type="molecule type" value="Genomic_DNA"/>
</dbReference>
<dbReference type="EMBL" id="AF369398">
    <property type="protein sequence ID" value="AAL09567.1"/>
    <property type="status" value="JOINED"/>
    <property type="molecule type" value="Genomic_DNA"/>
</dbReference>
<dbReference type="EMBL" id="AF369399">
    <property type="protein sequence ID" value="AAL09567.1"/>
    <property type="status" value="JOINED"/>
    <property type="molecule type" value="Genomic_DNA"/>
</dbReference>
<dbReference type="EMBL" id="AF369400">
    <property type="protein sequence ID" value="AAL09567.1"/>
    <property type="status" value="JOINED"/>
    <property type="molecule type" value="Genomic_DNA"/>
</dbReference>
<dbReference type="EMBL" id="AF369401">
    <property type="protein sequence ID" value="AAL09567.1"/>
    <property type="status" value="JOINED"/>
    <property type="molecule type" value="Genomic_DNA"/>
</dbReference>
<dbReference type="EMBL" id="AF369402">
    <property type="protein sequence ID" value="AAL09567.1"/>
    <property type="status" value="JOINED"/>
    <property type="molecule type" value="Genomic_DNA"/>
</dbReference>
<dbReference type="EMBL" id="AF369403">
    <property type="protein sequence ID" value="AAL09567.1"/>
    <property type="status" value="JOINED"/>
    <property type="molecule type" value="Genomic_DNA"/>
</dbReference>
<dbReference type="EMBL" id="AF369404">
    <property type="protein sequence ID" value="AAL09567.1"/>
    <property type="status" value="JOINED"/>
    <property type="molecule type" value="Genomic_DNA"/>
</dbReference>
<dbReference type="EMBL" id="AF369405">
    <property type="protein sequence ID" value="AAL09567.1"/>
    <property type="status" value="JOINED"/>
    <property type="molecule type" value="Genomic_DNA"/>
</dbReference>
<dbReference type="EMBL" id="AF369406">
    <property type="protein sequence ID" value="AAL09567.1"/>
    <property type="status" value="JOINED"/>
    <property type="molecule type" value="Genomic_DNA"/>
</dbReference>
<dbReference type="EMBL" id="AF369407">
    <property type="protein sequence ID" value="AAL09567.1"/>
    <property type="status" value="JOINED"/>
    <property type="molecule type" value="Genomic_DNA"/>
</dbReference>
<dbReference type="EMBL" id="AF369408">
    <property type="protein sequence ID" value="AAL09567.1"/>
    <property type="status" value="JOINED"/>
    <property type="molecule type" value="Genomic_DNA"/>
</dbReference>
<dbReference type="EMBL" id="AF369409">
    <property type="protein sequence ID" value="AAL09567.1"/>
    <property type="status" value="JOINED"/>
    <property type="molecule type" value="Genomic_DNA"/>
</dbReference>
<dbReference type="EMBL" id="AF369410">
    <property type="protein sequence ID" value="AAL09567.1"/>
    <property type="status" value="JOINED"/>
    <property type="molecule type" value="Genomic_DNA"/>
</dbReference>
<dbReference type="EMBL" id="AF369411">
    <property type="protein sequence ID" value="AAL09567.1"/>
    <property type="status" value="JOINED"/>
    <property type="molecule type" value="Genomic_DNA"/>
</dbReference>
<dbReference type="EMBL" id="AF369412">
    <property type="protein sequence ID" value="AAL09567.1"/>
    <property type="status" value="JOINED"/>
    <property type="molecule type" value="Genomic_DNA"/>
</dbReference>
<dbReference type="EMBL" id="AF369413">
    <property type="protein sequence ID" value="AAL09567.1"/>
    <property type="status" value="JOINED"/>
    <property type="molecule type" value="Genomic_DNA"/>
</dbReference>
<dbReference type="EMBL" id="AF369414">
    <property type="protein sequence ID" value="AAL09567.1"/>
    <property type="status" value="JOINED"/>
    <property type="molecule type" value="Genomic_DNA"/>
</dbReference>
<dbReference type="EMBL" id="AF369415">
    <property type="protein sequence ID" value="AAL09567.1"/>
    <property type="status" value="JOINED"/>
    <property type="molecule type" value="Genomic_DNA"/>
</dbReference>
<dbReference type="EMBL" id="AF369416">
    <property type="protein sequence ID" value="AAL09567.1"/>
    <property type="status" value="JOINED"/>
    <property type="molecule type" value="Genomic_DNA"/>
</dbReference>
<dbReference type="EMBL" id="AF369417">
    <property type="protein sequence ID" value="AAL09567.1"/>
    <property type="status" value="JOINED"/>
    <property type="molecule type" value="Genomic_DNA"/>
</dbReference>
<dbReference type="EMBL" id="AF369418">
    <property type="protein sequence ID" value="AAL09567.1"/>
    <property type="status" value="JOINED"/>
    <property type="molecule type" value="Genomic_DNA"/>
</dbReference>
<dbReference type="EMBL" id="AF369419">
    <property type="protein sequence ID" value="AAL09567.1"/>
    <property type="status" value="JOINED"/>
    <property type="molecule type" value="Genomic_DNA"/>
</dbReference>
<dbReference type="EMBL" id="AF369420">
    <property type="protein sequence ID" value="AAL09567.1"/>
    <property type="status" value="JOINED"/>
    <property type="molecule type" value="Genomic_DNA"/>
</dbReference>
<dbReference type="EMBL" id="AF369421">
    <property type="protein sequence ID" value="AAL09567.1"/>
    <property type="status" value="JOINED"/>
    <property type="molecule type" value="Genomic_DNA"/>
</dbReference>
<dbReference type="EMBL" id="AF369422">
    <property type="protein sequence ID" value="AAL09567.1"/>
    <property type="status" value="JOINED"/>
    <property type="molecule type" value="Genomic_DNA"/>
</dbReference>
<dbReference type="EMBL" id="AF369423">
    <property type="protein sequence ID" value="AAL09567.1"/>
    <property type="status" value="JOINED"/>
    <property type="molecule type" value="Genomic_DNA"/>
</dbReference>
<dbReference type="EMBL" id="AF369424">
    <property type="protein sequence ID" value="AAL09567.1"/>
    <property type="status" value="JOINED"/>
    <property type="molecule type" value="Genomic_DNA"/>
</dbReference>
<dbReference type="EMBL" id="AF369425">
    <property type="protein sequence ID" value="AAL09567.1"/>
    <property type="status" value="JOINED"/>
    <property type="molecule type" value="Genomic_DNA"/>
</dbReference>
<dbReference type="EMBL" id="AF369426">
    <property type="protein sequence ID" value="AAL09567.1"/>
    <property type="status" value="JOINED"/>
    <property type="molecule type" value="Genomic_DNA"/>
</dbReference>
<dbReference type="EMBL" id="AF369427">
    <property type="protein sequence ID" value="AAL09567.1"/>
    <property type="status" value="JOINED"/>
    <property type="molecule type" value="Genomic_DNA"/>
</dbReference>
<dbReference type="EMBL" id="AF369428">
    <property type="protein sequence ID" value="AAL09567.1"/>
    <property type="status" value="JOINED"/>
    <property type="molecule type" value="Genomic_DNA"/>
</dbReference>
<dbReference type="EMBL" id="AF369429">
    <property type="protein sequence ID" value="AAL09567.1"/>
    <property type="status" value="JOINED"/>
    <property type="molecule type" value="Genomic_DNA"/>
</dbReference>
<dbReference type="EMBL" id="AF369430">
    <property type="protein sequence ID" value="AAL09567.1"/>
    <property type="status" value="JOINED"/>
    <property type="molecule type" value="Genomic_DNA"/>
</dbReference>
<dbReference type="EMBL" id="AF369431">
    <property type="protein sequence ID" value="AAL09567.1"/>
    <property type="status" value="JOINED"/>
    <property type="molecule type" value="Genomic_DNA"/>
</dbReference>
<dbReference type="EMBL" id="AF369432">
    <property type="protein sequence ID" value="AAL09567.1"/>
    <property type="status" value="JOINED"/>
    <property type="molecule type" value="Genomic_DNA"/>
</dbReference>
<dbReference type="EMBL" id="AF369433">
    <property type="protein sequence ID" value="AAL09567.1"/>
    <property type="status" value="JOINED"/>
    <property type="molecule type" value="Genomic_DNA"/>
</dbReference>
<dbReference type="EMBL" id="AF369434">
    <property type="protein sequence ID" value="AAL09567.1"/>
    <property type="status" value="JOINED"/>
    <property type="molecule type" value="Genomic_DNA"/>
</dbReference>
<dbReference type="EMBL" id="AF369435">
    <property type="protein sequence ID" value="AAL09567.1"/>
    <property type="status" value="JOINED"/>
    <property type="molecule type" value="Genomic_DNA"/>
</dbReference>
<dbReference type="EMBL" id="AF369436">
    <property type="protein sequence ID" value="AAL09567.1"/>
    <property type="status" value="JOINED"/>
    <property type="molecule type" value="Genomic_DNA"/>
</dbReference>
<dbReference type="EMBL" id="AF369437">
    <property type="protein sequence ID" value="AAL09567.1"/>
    <property type="status" value="JOINED"/>
    <property type="molecule type" value="Genomic_DNA"/>
</dbReference>
<dbReference type="EMBL" id="AF369438">
    <property type="protein sequence ID" value="AAL09567.1"/>
    <property type="status" value="JOINED"/>
    <property type="molecule type" value="Genomic_DNA"/>
</dbReference>
<dbReference type="EMBL" id="AF369439">
    <property type="protein sequence ID" value="AAL09567.1"/>
    <property type="status" value="JOINED"/>
    <property type="molecule type" value="Genomic_DNA"/>
</dbReference>
<dbReference type="EMBL" id="AF369440">
    <property type="protein sequence ID" value="AAL09567.1"/>
    <property type="status" value="JOINED"/>
    <property type="molecule type" value="Genomic_DNA"/>
</dbReference>
<dbReference type="EMBL" id="AF369441">
    <property type="protein sequence ID" value="AAL09567.1"/>
    <property type="status" value="JOINED"/>
    <property type="molecule type" value="Genomic_DNA"/>
</dbReference>
<dbReference type="EMBL" id="AF369442">
    <property type="protein sequence ID" value="AAL09567.1"/>
    <property type="status" value="JOINED"/>
    <property type="molecule type" value="Genomic_DNA"/>
</dbReference>
<dbReference type="EMBL" id="AF369443">
    <property type="protein sequence ID" value="AAL09567.1"/>
    <property type="status" value="JOINED"/>
    <property type="molecule type" value="Genomic_DNA"/>
</dbReference>
<dbReference type="EMBL" id="AF369444">
    <property type="protein sequence ID" value="AAL09567.1"/>
    <property type="status" value="JOINED"/>
    <property type="molecule type" value="Genomic_DNA"/>
</dbReference>
<dbReference type="EMBL" id="AF369445">
    <property type="protein sequence ID" value="AAL09567.1"/>
    <property type="status" value="JOINED"/>
    <property type="molecule type" value="Genomic_DNA"/>
</dbReference>
<dbReference type="EMBL" id="AF369446">
    <property type="protein sequence ID" value="AAL09567.1"/>
    <property type="status" value="JOINED"/>
    <property type="molecule type" value="Genomic_DNA"/>
</dbReference>
<dbReference type="EMBL" id="AF369447">
    <property type="protein sequence ID" value="AAL09567.1"/>
    <property type="status" value="JOINED"/>
    <property type="molecule type" value="Genomic_DNA"/>
</dbReference>
<dbReference type="EMBL" id="AF369448">
    <property type="protein sequence ID" value="AAL09567.1"/>
    <property type="status" value="JOINED"/>
    <property type="molecule type" value="Genomic_DNA"/>
</dbReference>
<dbReference type="EMBL" id="AF369449">
    <property type="protein sequence ID" value="AAL09567.1"/>
    <property type="status" value="JOINED"/>
    <property type="molecule type" value="Genomic_DNA"/>
</dbReference>
<dbReference type="EMBL" id="AF369450">
    <property type="protein sequence ID" value="AAL09567.1"/>
    <property type="status" value="JOINED"/>
    <property type="molecule type" value="Genomic_DNA"/>
</dbReference>
<dbReference type="EMBL" id="AF369451">
    <property type="protein sequence ID" value="AAL09567.1"/>
    <property type="status" value="JOINED"/>
    <property type="molecule type" value="Genomic_DNA"/>
</dbReference>
<dbReference type="EMBL" id="AF369452">
    <property type="protein sequence ID" value="AAL09567.1"/>
    <property type="status" value="JOINED"/>
    <property type="molecule type" value="Genomic_DNA"/>
</dbReference>
<dbReference type="EMBL" id="AF369453">
    <property type="protein sequence ID" value="AAL09567.1"/>
    <property type="status" value="JOINED"/>
    <property type="molecule type" value="Genomic_DNA"/>
</dbReference>
<dbReference type="EMBL" id="AF369454">
    <property type="protein sequence ID" value="AAL09567.1"/>
    <property type="status" value="JOINED"/>
    <property type="molecule type" value="Genomic_DNA"/>
</dbReference>
<dbReference type="EMBL" id="AF369455">
    <property type="protein sequence ID" value="AAL09567.1"/>
    <property type="status" value="JOINED"/>
    <property type="molecule type" value="Genomic_DNA"/>
</dbReference>
<dbReference type="EMBL" id="AF369456">
    <property type="protein sequence ID" value="AAL09567.1"/>
    <property type="status" value="JOINED"/>
    <property type="molecule type" value="Genomic_DNA"/>
</dbReference>
<dbReference type="EMBL" id="AF369457">
    <property type="protein sequence ID" value="AAL09567.1"/>
    <property type="status" value="JOINED"/>
    <property type="molecule type" value="Genomic_DNA"/>
</dbReference>
<dbReference type="EMBL" id="AF369458">
    <property type="protein sequence ID" value="AAL09567.1"/>
    <property type="status" value="JOINED"/>
    <property type="molecule type" value="Genomic_DNA"/>
</dbReference>
<dbReference type="EMBL" id="AF369459">
    <property type="protein sequence ID" value="AAL09567.1"/>
    <property type="status" value="JOINED"/>
    <property type="molecule type" value="Genomic_DNA"/>
</dbReference>
<dbReference type="EMBL" id="AF369460">
    <property type="protein sequence ID" value="AAL09567.1"/>
    <property type="status" value="JOINED"/>
    <property type="molecule type" value="Genomic_DNA"/>
</dbReference>
<dbReference type="EMBL" id="AF369461">
    <property type="protein sequence ID" value="AAL09567.1"/>
    <property type="status" value="JOINED"/>
    <property type="molecule type" value="Genomic_DNA"/>
</dbReference>
<dbReference type="EMBL" id="AF369462">
    <property type="protein sequence ID" value="AAL09567.1"/>
    <property type="status" value="JOINED"/>
    <property type="molecule type" value="Genomic_DNA"/>
</dbReference>
<dbReference type="EMBL" id="AF369463">
    <property type="protein sequence ID" value="AAL09567.1"/>
    <property type="status" value="JOINED"/>
    <property type="molecule type" value="Genomic_DNA"/>
</dbReference>
<dbReference type="EMBL" id="AF369464">
    <property type="protein sequence ID" value="AAL09567.1"/>
    <property type="status" value="JOINED"/>
    <property type="molecule type" value="Genomic_DNA"/>
</dbReference>
<dbReference type="EMBL" id="AF369465">
    <property type="protein sequence ID" value="AAL09567.1"/>
    <property type="status" value="JOINED"/>
    <property type="molecule type" value="Genomic_DNA"/>
</dbReference>
<dbReference type="EMBL" id="AF369466">
    <property type="protein sequence ID" value="AAL09567.1"/>
    <property type="status" value="JOINED"/>
    <property type="molecule type" value="Genomic_DNA"/>
</dbReference>
<dbReference type="EMBL" id="AF369467">
    <property type="protein sequence ID" value="AAL09567.1"/>
    <property type="status" value="JOINED"/>
    <property type="molecule type" value="Genomic_DNA"/>
</dbReference>
<dbReference type="EMBL" id="AF369468">
    <property type="protein sequence ID" value="AAL09567.1"/>
    <property type="status" value="JOINED"/>
    <property type="molecule type" value="Genomic_DNA"/>
</dbReference>
<dbReference type="EMBL" id="AF369469">
    <property type="protein sequence ID" value="AAL09567.1"/>
    <property type="status" value="JOINED"/>
    <property type="molecule type" value="Genomic_DNA"/>
</dbReference>
<dbReference type="EMBL" id="AF369470">
    <property type="protein sequence ID" value="AAL09567.1"/>
    <property type="status" value="JOINED"/>
    <property type="molecule type" value="Genomic_DNA"/>
</dbReference>
<dbReference type="EMBL" id="AF369471">
    <property type="protein sequence ID" value="AAL09567.1"/>
    <property type="status" value="JOINED"/>
    <property type="molecule type" value="Genomic_DNA"/>
</dbReference>
<dbReference type="EMBL" id="AF369472">
    <property type="protein sequence ID" value="AAL09567.1"/>
    <property type="status" value="JOINED"/>
    <property type="molecule type" value="Genomic_DNA"/>
</dbReference>
<dbReference type="EMBL" id="AF369473">
    <property type="protein sequence ID" value="AAL09567.1"/>
    <property type="status" value="JOINED"/>
    <property type="molecule type" value="Genomic_DNA"/>
</dbReference>
<dbReference type="EMBL" id="AF369474">
    <property type="protein sequence ID" value="AAL09567.1"/>
    <property type="status" value="JOINED"/>
    <property type="molecule type" value="Genomic_DNA"/>
</dbReference>
<dbReference type="EMBL" id="AF369475">
    <property type="protein sequence ID" value="AAL09567.1"/>
    <property type="status" value="JOINED"/>
    <property type="molecule type" value="Genomic_DNA"/>
</dbReference>
<dbReference type="EMBL" id="AF369476">
    <property type="protein sequence ID" value="AAL09567.1"/>
    <property type="status" value="JOINED"/>
    <property type="molecule type" value="Genomic_DNA"/>
</dbReference>
<dbReference type="CCDS" id="CCDS24245.1"/>
<dbReference type="PIR" id="S25111">
    <property type="entry name" value="S25111"/>
</dbReference>
<dbReference type="RefSeq" id="NP_032538.2">
    <property type="nucleotide sequence ID" value="NM_008512.2"/>
</dbReference>
<dbReference type="SMR" id="Q91ZX7"/>
<dbReference type="BioGRID" id="201201">
    <property type="interactions" value="27"/>
</dbReference>
<dbReference type="ComplexPortal" id="CPX-4461">
    <property type="entry name" value="Prolow-density lipoprotein receptor-related protein 1 complex"/>
</dbReference>
<dbReference type="CORUM" id="Q91ZX7"/>
<dbReference type="DIP" id="DIP-47785N"/>
<dbReference type="FunCoup" id="Q91ZX7">
    <property type="interactions" value="580"/>
</dbReference>
<dbReference type="IntAct" id="Q91ZX7">
    <property type="interactions" value="10"/>
</dbReference>
<dbReference type="MINT" id="Q91ZX7"/>
<dbReference type="STRING" id="10090.ENSMUSP00000044004"/>
<dbReference type="GlyConnect" id="2611">
    <property type="glycosylation" value="35 N-Linked glycans (30 sites)"/>
</dbReference>
<dbReference type="GlyCosmos" id="Q91ZX7">
    <property type="glycosylation" value="51 sites, 33 glycans"/>
</dbReference>
<dbReference type="GlyGen" id="Q91ZX7">
    <property type="glycosylation" value="53 sites, 49 N-linked glycans (37 sites), 1 O-linked glycan (1 site)"/>
</dbReference>
<dbReference type="iPTMnet" id="Q91ZX7"/>
<dbReference type="PhosphoSitePlus" id="Q91ZX7"/>
<dbReference type="SwissPalm" id="Q91ZX7"/>
<dbReference type="CPTAC" id="non-CPTAC-3838"/>
<dbReference type="jPOST" id="Q91ZX7"/>
<dbReference type="PaxDb" id="10090-ENSMUSP00000044004"/>
<dbReference type="PeptideAtlas" id="Q91ZX7"/>
<dbReference type="ProteomicsDB" id="252676"/>
<dbReference type="Pumba" id="Q91ZX7"/>
<dbReference type="DNASU" id="16971"/>
<dbReference type="GeneID" id="16971"/>
<dbReference type="KEGG" id="mmu:16971"/>
<dbReference type="UCSC" id="uc007hjx.1">
    <property type="organism name" value="mouse"/>
</dbReference>
<dbReference type="AGR" id="MGI:96828"/>
<dbReference type="CTD" id="4035"/>
<dbReference type="MGI" id="MGI:96828">
    <property type="gene designation" value="Lrp1"/>
</dbReference>
<dbReference type="eggNOG" id="KOG1215">
    <property type="taxonomic scope" value="Eukaryota"/>
</dbReference>
<dbReference type="InParanoid" id="Q91ZX7"/>
<dbReference type="OrthoDB" id="10066840at2759"/>
<dbReference type="PhylomeDB" id="Q91ZX7"/>
<dbReference type="TreeFam" id="TF315253"/>
<dbReference type="Reactome" id="R-MMU-2168880">
    <property type="pathway name" value="Scavenging of heme from plasma"/>
</dbReference>
<dbReference type="Reactome" id="R-MMU-975634">
    <property type="pathway name" value="Retinoid metabolism and transport"/>
</dbReference>
<dbReference type="BioGRID-ORCS" id="16971">
    <property type="hits" value="3 hits in 80 CRISPR screens"/>
</dbReference>
<dbReference type="CD-CODE" id="CE726F99">
    <property type="entry name" value="Postsynaptic density"/>
</dbReference>
<dbReference type="ChiTaRS" id="Lrp1">
    <property type="organism name" value="mouse"/>
</dbReference>
<dbReference type="PRO" id="PR:Q91ZX7"/>
<dbReference type="Proteomes" id="UP000000589">
    <property type="component" value="Unplaced"/>
</dbReference>
<dbReference type="RNAct" id="Q91ZX7">
    <property type="molecule type" value="protein"/>
</dbReference>
<dbReference type="GO" id="GO:0005905">
    <property type="term" value="C:clathrin-coated pit"/>
    <property type="evidence" value="ECO:0007669"/>
    <property type="project" value="UniProtKB-KW"/>
</dbReference>
<dbReference type="GO" id="GO:0009897">
    <property type="term" value="C:external side of plasma membrane"/>
    <property type="evidence" value="ECO:0000314"/>
    <property type="project" value="MGI"/>
</dbReference>
<dbReference type="GO" id="GO:0098978">
    <property type="term" value="C:glutamatergic synapse"/>
    <property type="evidence" value="ECO:0000314"/>
    <property type="project" value="SynGO"/>
</dbReference>
<dbReference type="GO" id="GO:0005794">
    <property type="term" value="C:Golgi apparatus"/>
    <property type="evidence" value="ECO:0007669"/>
    <property type="project" value="UniProtKB-KW"/>
</dbReference>
<dbReference type="GO" id="GO:0016020">
    <property type="term" value="C:membrane"/>
    <property type="evidence" value="ECO:0000314"/>
    <property type="project" value="MGI"/>
</dbReference>
<dbReference type="GO" id="GO:0005815">
    <property type="term" value="C:microtubule organizing center"/>
    <property type="evidence" value="ECO:0007669"/>
    <property type="project" value="UniProtKB-SubCell"/>
</dbReference>
<dbReference type="GO" id="GO:0005634">
    <property type="term" value="C:nucleus"/>
    <property type="evidence" value="ECO:0007669"/>
    <property type="project" value="UniProtKB-SubCell"/>
</dbReference>
<dbReference type="GO" id="GO:0005886">
    <property type="term" value="C:plasma membrane"/>
    <property type="evidence" value="ECO:0000314"/>
    <property type="project" value="UniProtKB"/>
</dbReference>
<dbReference type="GO" id="GO:0098839">
    <property type="term" value="C:postsynaptic density membrane"/>
    <property type="evidence" value="ECO:0000314"/>
    <property type="project" value="SynGO"/>
</dbReference>
<dbReference type="GO" id="GO:0043235">
    <property type="term" value="C:receptor complex"/>
    <property type="evidence" value="ECO:0000266"/>
    <property type="project" value="MGI"/>
</dbReference>
<dbReference type="GO" id="GO:0016964">
    <property type="term" value="F:alpha-2 macroglobulin receptor activity"/>
    <property type="evidence" value="ECO:0000250"/>
    <property type="project" value="UniProtKB"/>
</dbReference>
<dbReference type="GO" id="GO:0005509">
    <property type="term" value="F:calcium ion binding"/>
    <property type="evidence" value="ECO:0000314"/>
    <property type="project" value="UniProtKB"/>
</dbReference>
<dbReference type="GO" id="GO:0038024">
    <property type="term" value="F:cargo receptor activity"/>
    <property type="evidence" value="ECO:0000315"/>
    <property type="project" value="ARUK-UCL"/>
</dbReference>
<dbReference type="GO" id="GO:0005102">
    <property type="term" value="F:signaling receptor binding"/>
    <property type="evidence" value="ECO:0000353"/>
    <property type="project" value="BHF-UCL"/>
</dbReference>
<dbReference type="GO" id="GO:0097242">
    <property type="term" value="P:amyloid-beta clearance"/>
    <property type="evidence" value="ECO:0000315"/>
    <property type="project" value="BHF-UCL"/>
</dbReference>
<dbReference type="GO" id="GO:0150094">
    <property type="term" value="P:amyloid-beta clearance by cellular catabolic process"/>
    <property type="evidence" value="ECO:0000314"/>
    <property type="project" value="ARUK-UCL"/>
</dbReference>
<dbReference type="GO" id="GO:0150093">
    <property type="term" value="P:amyloid-beta clearance by transcytosis"/>
    <property type="evidence" value="ECO:0000314"/>
    <property type="project" value="ARUK-UCL"/>
</dbReference>
<dbReference type="GO" id="GO:0035909">
    <property type="term" value="P:aorta morphogenesis"/>
    <property type="evidence" value="ECO:0000315"/>
    <property type="project" value="BHF-UCL"/>
</dbReference>
<dbReference type="GO" id="GO:0043277">
    <property type="term" value="P:apoptotic cell clearance"/>
    <property type="evidence" value="ECO:0000315"/>
    <property type="project" value="MGI"/>
</dbReference>
<dbReference type="GO" id="GO:0002265">
    <property type="term" value="P:astrocyte activation involved in immune response"/>
    <property type="evidence" value="ECO:0000316"/>
    <property type="project" value="ARUK-UCL"/>
</dbReference>
<dbReference type="GO" id="GO:0003279">
    <property type="term" value="P:cardiac septum development"/>
    <property type="evidence" value="ECO:0000315"/>
    <property type="project" value="MGI"/>
</dbReference>
<dbReference type="GO" id="GO:1904646">
    <property type="term" value="P:cellular response to amyloid-beta"/>
    <property type="evidence" value="ECO:0000316"/>
    <property type="project" value="ARUK-UCL"/>
</dbReference>
<dbReference type="GO" id="GO:0008203">
    <property type="term" value="P:cholesterol metabolic process"/>
    <property type="evidence" value="ECO:0000315"/>
    <property type="project" value="MGI"/>
</dbReference>
<dbReference type="GO" id="GO:0060976">
    <property type="term" value="P:coronary vasculature development"/>
    <property type="evidence" value="ECO:0000315"/>
    <property type="project" value="MGI"/>
</dbReference>
<dbReference type="GO" id="GO:0007167">
    <property type="term" value="P:enzyme-linked receptor protein signaling pathway"/>
    <property type="evidence" value="ECO:0000315"/>
    <property type="project" value="BHF-UCL"/>
</dbReference>
<dbReference type="GO" id="GO:0007041">
    <property type="term" value="P:lysosomal transport"/>
    <property type="evidence" value="ECO:0000314"/>
    <property type="project" value="UniProtKB"/>
</dbReference>
<dbReference type="GO" id="GO:0010629">
    <property type="term" value="P:negative regulation of gene expression"/>
    <property type="evidence" value="ECO:0000315"/>
    <property type="project" value="BHF-UCL"/>
</dbReference>
<dbReference type="GO" id="GO:2000587">
    <property type="term" value="P:negative regulation of platelet-derived growth factor receptor-beta signaling pathway"/>
    <property type="evidence" value="ECO:0000315"/>
    <property type="project" value="BHF-UCL"/>
</dbReference>
<dbReference type="GO" id="GO:0060392">
    <property type="term" value="P:negative regulation of SMAD protein signal transduction"/>
    <property type="evidence" value="ECO:0000315"/>
    <property type="project" value="BHF-UCL"/>
</dbReference>
<dbReference type="GO" id="GO:0014912">
    <property type="term" value="P:negative regulation of smooth muscle cell migration"/>
    <property type="evidence" value="ECO:0000315"/>
    <property type="project" value="BHF-UCL"/>
</dbReference>
<dbReference type="GO" id="GO:0030512">
    <property type="term" value="P:negative regulation of transforming growth factor beta receptor signaling pathway"/>
    <property type="evidence" value="ECO:0000316"/>
    <property type="project" value="BHF-UCL"/>
</dbReference>
<dbReference type="GO" id="GO:0030178">
    <property type="term" value="P:negative regulation of Wnt signaling pathway"/>
    <property type="evidence" value="ECO:0000314"/>
    <property type="project" value="MGI"/>
</dbReference>
<dbReference type="GO" id="GO:1900223">
    <property type="term" value="P:positive regulation of amyloid-beta clearance"/>
    <property type="evidence" value="ECO:0000315"/>
    <property type="project" value="ARUK-UCL"/>
</dbReference>
<dbReference type="GO" id="GO:0010875">
    <property type="term" value="P:positive regulation of cholesterol efflux"/>
    <property type="evidence" value="ECO:0000315"/>
    <property type="project" value="BHF-UCL"/>
</dbReference>
<dbReference type="GO" id="GO:0032370">
    <property type="term" value="P:positive regulation of lipid transport"/>
    <property type="evidence" value="ECO:0000315"/>
    <property type="project" value="BHF-UCL"/>
</dbReference>
<dbReference type="GO" id="GO:1903064">
    <property type="term" value="P:positive regulation of reverse cholesterol transport"/>
    <property type="evidence" value="ECO:0000315"/>
    <property type="project" value="BHF-UCL"/>
</dbReference>
<dbReference type="GO" id="GO:1904300">
    <property type="term" value="P:positive regulation of transcytosis"/>
    <property type="evidence" value="ECO:0000315"/>
    <property type="project" value="ARUK-UCL"/>
</dbReference>
<dbReference type="GO" id="GO:0006898">
    <property type="term" value="P:receptor-mediated endocytosis"/>
    <property type="evidence" value="ECO:0000314"/>
    <property type="project" value="MGI"/>
</dbReference>
<dbReference type="GO" id="GO:0032956">
    <property type="term" value="P:regulation of actin cytoskeleton organization"/>
    <property type="evidence" value="ECO:0000315"/>
    <property type="project" value="BHF-UCL"/>
</dbReference>
<dbReference type="GO" id="GO:0099149">
    <property type="term" value="P:regulation of postsynaptic neurotransmitter receptor internalization"/>
    <property type="evidence" value="ECO:0000314"/>
    <property type="project" value="SynGO"/>
</dbReference>
<dbReference type="GO" id="GO:1905109">
    <property type="term" value="P:regulation of pulmonary blood vessel remodeling"/>
    <property type="evidence" value="ECO:0000315"/>
    <property type="project" value="BHF-UCL"/>
</dbReference>
<dbReference type="GO" id="GO:0150104">
    <property type="term" value="P:transport across blood-brain barrier"/>
    <property type="evidence" value="ECO:0000315"/>
    <property type="project" value="ARUK-UCL"/>
</dbReference>
<dbReference type="CDD" id="cd00054">
    <property type="entry name" value="EGF_CA"/>
    <property type="match status" value="1"/>
</dbReference>
<dbReference type="CDD" id="cd00112">
    <property type="entry name" value="LDLa"/>
    <property type="match status" value="31"/>
</dbReference>
<dbReference type="FunFam" id="2.10.25.10:FF:000204">
    <property type="entry name" value="LDL receptor related protein 1"/>
    <property type="match status" value="1"/>
</dbReference>
<dbReference type="FunFam" id="4.10.400.10:FF:000020">
    <property type="entry name" value="LDL receptor related protein 1"/>
    <property type="match status" value="1"/>
</dbReference>
<dbReference type="FunFam" id="4.10.400.10:FF:000022">
    <property type="entry name" value="LDL receptor related protein 1"/>
    <property type="match status" value="1"/>
</dbReference>
<dbReference type="FunFam" id="4.10.400.10:FF:000066">
    <property type="entry name" value="LDL receptor related protein 1"/>
    <property type="match status" value="1"/>
</dbReference>
<dbReference type="FunFam" id="2.120.10.30:FF:000012">
    <property type="entry name" value="Low density lipoprotein receptor-related protein 1"/>
    <property type="match status" value="1"/>
</dbReference>
<dbReference type="FunFam" id="4.10.400.10:FF:000007">
    <property type="entry name" value="Low density lipoprotein receptor-related protein 1"/>
    <property type="match status" value="1"/>
</dbReference>
<dbReference type="FunFam" id="4.10.400.10:FF:000008">
    <property type="entry name" value="Low density lipoprotein receptor-related protein 1"/>
    <property type="match status" value="1"/>
</dbReference>
<dbReference type="FunFam" id="4.10.400.10:FF:000021">
    <property type="entry name" value="Low density lipoprotein receptor-related protein 1"/>
    <property type="match status" value="1"/>
</dbReference>
<dbReference type="FunFam" id="4.10.400.10:FF:000023">
    <property type="entry name" value="Low density lipoprotein receptor-related protein 1"/>
    <property type="match status" value="1"/>
</dbReference>
<dbReference type="FunFam" id="2.120.10.30:FF:000010">
    <property type="entry name" value="Low density lipoprotein receptor-related protein 1B"/>
    <property type="match status" value="1"/>
</dbReference>
<dbReference type="FunFam" id="2.10.25.10:FF:000009">
    <property type="entry name" value="Low-density lipoprotein receptor isoform 1"/>
    <property type="match status" value="1"/>
</dbReference>
<dbReference type="FunFam" id="2.10.25.10:FF:000129">
    <property type="entry name" value="Low-density lipoprotein receptor-related protein 1"/>
    <property type="match status" value="1"/>
</dbReference>
<dbReference type="FunFam" id="2.10.25.10:FF:000144">
    <property type="entry name" value="Low-density lipoprotein receptor-related protein 1"/>
    <property type="match status" value="1"/>
</dbReference>
<dbReference type="FunFam" id="2.10.25.10:FF:000505">
    <property type="entry name" value="Low-density lipoprotein receptor-related protein 1"/>
    <property type="match status" value="1"/>
</dbReference>
<dbReference type="FunFam" id="2.120.10.30:FF:000014">
    <property type="entry name" value="Low-density lipoprotein receptor-related protein 1"/>
    <property type="match status" value="1"/>
</dbReference>
<dbReference type="FunFam" id="2.120.10.30:FF:000015">
    <property type="entry name" value="Low-density lipoprotein receptor-related protein 1"/>
    <property type="match status" value="1"/>
</dbReference>
<dbReference type="FunFam" id="2.120.10.30:FF:000018">
    <property type="entry name" value="Low-density lipoprotein receptor-related protein 1"/>
    <property type="match status" value="1"/>
</dbReference>
<dbReference type="FunFam" id="2.120.10.30:FF:000019">
    <property type="entry name" value="Low-density lipoprotein receptor-related protein 1"/>
    <property type="match status" value="1"/>
</dbReference>
<dbReference type="FunFam" id="4.10.400.10:FF:000001">
    <property type="entry name" value="Low-density lipoprotein receptor-related protein 1"/>
    <property type="match status" value="1"/>
</dbReference>
<dbReference type="FunFam" id="4.10.400.10:FF:000002">
    <property type="entry name" value="Low-density lipoprotein receptor-related protein 1"/>
    <property type="match status" value="4"/>
</dbReference>
<dbReference type="FunFam" id="4.10.400.10:FF:000004">
    <property type="entry name" value="Low-density lipoprotein receptor-related protein 1"/>
    <property type="match status" value="1"/>
</dbReference>
<dbReference type="FunFam" id="4.10.400.10:FF:000009">
    <property type="entry name" value="Low-density lipoprotein receptor-related protein 1"/>
    <property type="match status" value="1"/>
</dbReference>
<dbReference type="FunFam" id="4.10.400.10:FF:000010">
    <property type="entry name" value="Low-density lipoprotein receptor-related protein 1"/>
    <property type="match status" value="1"/>
</dbReference>
<dbReference type="FunFam" id="4.10.400.10:FF:000011">
    <property type="entry name" value="Low-density lipoprotein receptor-related protein 1"/>
    <property type="match status" value="1"/>
</dbReference>
<dbReference type="FunFam" id="4.10.400.10:FF:000012">
    <property type="entry name" value="Low-density lipoprotein receptor-related protein 1"/>
    <property type="match status" value="1"/>
</dbReference>
<dbReference type="FunFam" id="4.10.400.10:FF:000015">
    <property type="entry name" value="Low-density lipoprotein receptor-related protein 1"/>
    <property type="match status" value="1"/>
</dbReference>
<dbReference type="FunFam" id="4.10.400.10:FF:000018">
    <property type="entry name" value="Low-density lipoprotein receptor-related protein 1"/>
    <property type="match status" value="1"/>
</dbReference>
<dbReference type="FunFam" id="4.10.400.10:FF:000026">
    <property type="entry name" value="Low-density lipoprotein receptor-related protein 1"/>
    <property type="match status" value="1"/>
</dbReference>
<dbReference type="FunFam" id="4.10.400.10:FF:000031">
    <property type="entry name" value="Low-density lipoprotein receptor-related protein 1"/>
    <property type="match status" value="1"/>
</dbReference>
<dbReference type="FunFam" id="2.10.25.10:FF:000072">
    <property type="entry name" value="Low-density lipoprotein receptor-related protein 1B"/>
    <property type="match status" value="1"/>
</dbReference>
<dbReference type="FunFam" id="4.10.400.10:FF:000005">
    <property type="entry name" value="low-density lipoprotein receptor-related protein 1B"/>
    <property type="match status" value="1"/>
</dbReference>
<dbReference type="FunFam" id="2.10.25.10:FF:000088">
    <property type="entry name" value="Prolow-density lipoprotein receptor-related protein 1"/>
    <property type="match status" value="2"/>
</dbReference>
<dbReference type="FunFam" id="2.120.10.30:FF:000020">
    <property type="entry name" value="Prolow-density lipoprotein receptor-related protein 1"/>
    <property type="match status" value="1"/>
</dbReference>
<dbReference type="FunFam" id="4.10.400.10:FF:000013">
    <property type="entry name" value="Prolow-density lipoprotein receptor-related protein 1"/>
    <property type="match status" value="1"/>
</dbReference>
<dbReference type="FunFam" id="4.10.400.10:FF:000047">
    <property type="entry name" value="Prolow-density lipoprotein receptor-related protein 1"/>
    <property type="match status" value="1"/>
</dbReference>
<dbReference type="FunFam" id="4.10.400.10:FF:000059">
    <property type="entry name" value="Prolow-density lipoprotein receptor-related protein 1"/>
    <property type="match status" value="1"/>
</dbReference>
<dbReference type="FunFam" id="4.10.400.10:FF:000071">
    <property type="entry name" value="Prolow-density lipoprotein receptor-related protein 1"/>
    <property type="match status" value="1"/>
</dbReference>
<dbReference type="FunFam" id="2.10.25.10:FF:000458">
    <property type="entry name" value="prolow-density lipoprotein receptor-related protein 1"/>
    <property type="match status" value="1"/>
</dbReference>
<dbReference type="FunFam" id="4.10.400.10:FF:000028">
    <property type="entry name" value="prolow-density lipoprotein receptor-related protein 1"/>
    <property type="match status" value="1"/>
</dbReference>
<dbReference type="FunFam" id="4.10.400.10:FF:000029">
    <property type="entry name" value="prolow-density lipoprotein receptor-related protein 1"/>
    <property type="match status" value="1"/>
</dbReference>
<dbReference type="FunFam" id="4.10.400.10:FF:000035">
    <property type="entry name" value="prolow-density lipoprotein receptor-related protein 1"/>
    <property type="match status" value="1"/>
</dbReference>
<dbReference type="FunFam" id="2.120.10.30:FF:000009">
    <property type="entry name" value="Putative low-density lipoprotein receptor-related protein 1B"/>
    <property type="match status" value="1"/>
</dbReference>
<dbReference type="Gene3D" id="4.10.1220.10">
    <property type="entry name" value="EGF-type module"/>
    <property type="match status" value="1"/>
</dbReference>
<dbReference type="Gene3D" id="2.10.25.10">
    <property type="entry name" value="Laminin"/>
    <property type="match status" value="13"/>
</dbReference>
<dbReference type="Gene3D" id="4.10.400.10">
    <property type="entry name" value="Low-density Lipoprotein Receptor"/>
    <property type="match status" value="30"/>
</dbReference>
<dbReference type="Gene3D" id="2.120.10.30">
    <property type="entry name" value="TolB, C-terminal domain"/>
    <property type="match status" value="8"/>
</dbReference>
<dbReference type="InterPro" id="IPR011042">
    <property type="entry name" value="6-blade_b-propeller_TolB-like"/>
</dbReference>
<dbReference type="InterPro" id="IPR026823">
    <property type="entry name" value="cEGF"/>
</dbReference>
<dbReference type="InterPro" id="IPR001881">
    <property type="entry name" value="EGF-like_Ca-bd_dom"/>
</dbReference>
<dbReference type="InterPro" id="IPR000742">
    <property type="entry name" value="EGF-like_dom"/>
</dbReference>
<dbReference type="InterPro" id="IPR000152">
    <property type="entry name" value="EGF-type_Asp/Asn_hydroxyl_site"/>
</dbReference>
<dbReference type="InterPro" id="IPR018097">
    <property type="entry name" value="EGF_Ca-bd_CS"/>
</dbReference>
<dbReference type="InterPro" id="IPR009030">
    <property type="entry name" value="Growth_fac_rcpt_cys_sf"/>
</dbReference>
<dbReference type="InterPro" id="IPR036055">
    <property type="entry name" value="LDL_receptor-like_sf"/>
</dbReference>
<dbReference type="InterPro" id="IPR051221">
    <property type="entry name" value="LDLR-related"/>
</dbReference>
<dbReference type="InterPro" id="IPR023415">
    <property type="entry name" value="LDLR_class-A_CS"/>
</dbReference>
<dbReference type="InterPro" id="IPR000033">
    <property type="entry name" value="LDLR_classB_rpt"/>
</dbReference>
<dbReference type="InterPro" id="IPR002172">
    <property type="entry name" value="LDrepeatLR_classA_rpt"/>
</dbReference>
<dbReference type="InterPro" id="IPR032485">
    <property type="entry name" value="LRP1-like_beta_prop"/>
</dbReference>
<dbReference type="InterPro" id="IPR049883">
    <property type="entry name" value="NOTCH1_EGF-like"/>
</dbReference>
<dbReference type="PANTHER" id="PTHR22722:SF15">
    <property type="entry name" value="LOW-DENSITY LIPOPROTEIN RECEPTOR-RELATED"/>
    <property type="match status" value="1"/>
</dbReference>
<dbReference type="PANTHER" id="PTHR22722">
    <property type="entry name" value="LOW-DENSITY LIPOPROTEIN RECEPTOR-RELATED PROTEIN 2-RELATED"/>
    <property type="match status" value="1"/>
</dbReference>
<dbReference type="Pfam" id="PF12662">
    <property type="entry name" value="cEGF"/>
    <property type="match status" value="1"/>
</dbReference>
<dbReference type="Pfam" id="PF16472">
    <property type="entry name" value="DUF5050"/>
    <property type="match status" value="1"/>
</dbReference>
<dbReference type="Pfam" id="PF00008">
    <property type="entry name" value="EGF"/>
    <property type="match status" value="1"/>
</dbReference>
<dbReference type="Pfam" id="PF07645">
    <property type="entry name" value="EGF_CA"/>
    <property type="match status" value="2"/>
</dbReference>
<dbReference type="Pfam" id="PF14670">
    <property type="entry name" value="FXa_inhibition"/>
    <property type="match status" value="3"/>
</dbReference>
<dbReference type="Pfam" id="PF00057">
    <property type="entry name" value="Ldl_recept_a"/>
    <property type="match status" value="29"/>
</dbReference>
<dbReference type="Pfam" id="PF00058">
    <property type="entry name" value="Ldl_recept_b"/>
    <property type="match status" value="11"/>
</dbReference>
<dbReference type="PRINTS" id="PR00261">
    <property type="entry name" value="LDLRECEPTOR"/>
</dbReference>
<dbReference type="SMART" id="SM00181">
    <property type="entry name" value="EGF"/>
    <property type="match status" value="26"/>
</dbReference>
<dbReference type="SMART" id="SM00179">
    <property type="entry name" value="EGF_CA"/>
    <property type="match status" value="7"/>
</dbReference>
<dbReference type="SMART" id="SM00192">
    <property type="entry name" value="LDLa"/>
    <property type="match status" value="31"/>
</dbReference>
<dbReference type="SMART" id="SM00135">
    <property type="entry name" value="LY"/>
    <property type="match status" value="35"/>
</dbReference>
<dbReference type="SUPFAM" id="SSF57196">
    <property type="entry name" value="EGF/Laminin"/>
    <property type="match status" value="2"/>
</dbReference>
<dbReference type="SUPFAM" id="SSF57184">
    <property type="entry name" value="Growth factor receptor domain"/>
    <property type="match status" value="4"/>
</dbReference>
<dbReference type="SUPFAM" id="SSF57424">
    <property type="entry name" value="LDL receptor-like module"/>
    <property type="match status" value="30"/>
</dbReference>
<dbReference type="SUPFAM" id="SSF63825">
    <property type="entry name" value="YWTD domain"/>
    <property type="match status" value="8"/>
</dbReference>
<dbReference type="PROSITE" id="PS00010">
    <property type="entry name" value="ASX_HYDROXYL"/>
    <property type="match status" value="3"/>
</dbReference>
<dbReference type="PROSITE" id="PS00022">
    <property type="entry name" value="EGF_1"/>
    <property type="match status" value="5"/>
</dbReference>
<dbReference type="PROSITE" id="PS01186">
    <property type="entry name" value="EGF_2"/>
    <property type="match status" value="8"/>
</dbReference>
<dbReference type="PROSITE" id="PS50026">
    <property type="entry name" value="EGF_3"/>
    <property type="match status" value="6"/>
</dbReference>
<dbReference type="PROSITE" id="PS01187">
    <property type="entry name" value="EGF_CA"/>
    <property type="match status" value="2"/>
</dbReference>
<dbReference type="PROSITE" id="PS01209">
    <property type="entry name" value="LDLRA_1"/>
    <property type="match status" value="27"/>
</dbReference>
<dbReference type="PROSITE" id="PS50068">
    <property type="entry name" value="LDLRA_2"/>
    <property type="match status" value="31"/>
</dbReference>
<dbReference type="PROSITE" id="PS51120">
    <property type="entry name" value="LDLRB"/>
    <property type="match status" value="34"/>
</dbReference>
<name>LRP1_MOUSE</name>